<organism>
    <name type="scientific">Homo sapiens</name>
    <name type="common">Human</name>
    <dbReference type="NCBI Taxonomy" id="9606"/>
    <lineage>
        <taxon>Eukaryota</taxon>
        <taxon>Metazoa</taxon>
        <taxon>Chordata</taxon>
        <taxon>Craniata</taxon>
        <taxon>Vertebrata</taxon>
        <taxon>Euteleostomi</taxon>
        <taxon>Mammalia</taxon>
        <taxon>Eutheria</taxon>
        <taxon>Euarchontoglires</taxon>
        <taxon>Primates</taxon>
        <taxon>Haplorrhini</taxon>
        <taxon>Catarrhini</taxon>
        <taxon>Hominidae</taxon>
        <taxon>Homo</taxon>
    </lineage>
</organism>
<gene>
    <name type="primary">BIRC6</name>
    <name type="synonym">KIAA1289</name>
</gene>
<name>BIRC6_HUMAN</name>
<sequence>MVTGGGAAPPGTVTEPLPSVIVLSAGRKMAAAAAAASGPGCSSAAGAGAAGVSEWLVLRDGCMHCDADGLHSLSYHPALNAILAVTSRGTIKVIDGTSGATLQASALSAKPGGQVKCQYISAVDKVIFVDDYAVGCRKDLNGILLLDTALQTPVSKQDDVVQLELPVTEAQQLLSACLEKVDISSTEGYDLFITQLKDGLKNTSHETAANHKVAKWATVTFHLPHHVLKSIASAIVNELKKINQNVAALPVASSVMDRLSYLLPSARPELGVGPGRSVDRSLMYSEANRRETFTSWPHVGYRWAQPDPMAQAGFYHQPASSGDDRAMCFTCSVCLVCWEPTDEPWSEHERHSPNCPFVKGEHTQNVPLSVTLATSPAQFPCTDGTDRISCFGSGSCPHFLAAATKRGKICIWDVSKLMKVHLKFEINAYDPAIVQQLILSGDPSSGVDSRRPTLAWLEDSSSCSDIPKLEGDSDDLLEDSDSEEHSRSDSVTGHTSQKEAMEVSLDITALSILQQPEKLQWEIVANVLEDTVKDLEELGANPCLTNSKSEKTKEKHQEQHNIPFPCLLAGGLLTYKSPATSPISSNSHRSLDGLSRTQGESISEQGSTDNESCTNSELNSPLVRRTLPVLLLYSIKESDEKAGKIFSQMNNIMSKSLHDDGFTVPQIIEMELDSQEQLLLQDPPVTYIQQFADAAANLTSPDSEKWNSVFPKPGTLVQCLRLPKFAEEENLCIDSITPCADGIHLLVGLRTCPVESLSAINQVEALNNLNKLNSALCNRRKGELESNLAVVNGANISVIQHESPADVQTPLIIQPEQRNVSGGYLVLYKMNYATRIVTLEEEPIKIQHIKDPQDTITSLILLPPDILDNREDDCEEPIEDMQLTSKNGFEREKTSDISTLGHLVITTQGGYVKILDLSNFEILAKVEPPKKEGTEEQDTFVSVIYCSGTDRLCACTKGGELHFLQIGGTCDDIDEADILVDGSLSKGIEPSSEGSKPLSNPSSPGISGVDLLVDQPFTLEILTSLVELTRFETLTPRFSATVPPCWVEVQQEQQQRRHPQHLHQQHHGDAAQHTRTWKLQTDSNSWDEHVFELVLPKACMVGHVDFKFVLNSNITNIPQIQVTLLKNKAPGLGKVNALNIEVEQNGKPSLVDLNEEMQHMDVEESQCLRLCPFLEDHKEDILCGPVWLASGLDLSGHAGMLTLTSPKLVKGMAGGKYRSFLIHVKAVNERGTEEICNGGMRPVVRLPSLKHQSNKGYSLASLLAKVAAGKEKSSNVKNENTSGTRKSENLRGCDLLQEVSVTIRRFKKTSISKERVQRCAMLQFSEFHEKLLNTLCRKTDDGQITEHAQSLVLDTLCWLAGVHSNGPGSSKEGNENLLSKTRKFLSDIVRVCFFEAGRSIAHKCARFLALCISNGKCDPCQPAFGPVLLKALLDNMSFLPAATTGGSVYWYFVLLNYVKDEDLAGCSTACASLLTAVSRQLQDRLTPMEALLQTRYGLYSSPFDPVLFDLEMSGSSCKNVYNSSIGVQSDEIDLSDVLSGNGKVSSCTAAEGSFTSLTGLLEVEPLHFTCVSTSDGTRIERDDAMSSFGVTPAVGGLSSGTVGEASTALSSAAQVALQSLSHAMASAEQQLQVLQEKQQQLLKLQQQKAKLEAKLHQTTAAAAAAASAVGPVHNSVPSNPVAAPGFFIHPSDVIPPTPKTTPLFMTPPLTPPNEAVSVVINAELAQLFPGSVIDPPAVNLAAHNKNSNKSRMNPLGSGLALAISHASHFLQPPPHQSIIIERMHSGARRFVTLDFGRPILLTDVLIPTCGDLASLSIDIWTLGEEVDGRRLVVATDISTHSLILHDLIPPPVCRFMKITVIGRYGSTNARAKIPLGFYYGHTYILPWESELKLMHDPLKGEGESANQPEIDQHLAMMVALQEDIQCRYNLACHRLETLLQSIDLPPLNSANNAQYFLRKPDKAVEEDSRVFSAYQDCIQLQLQLNLAHNAVQRLKVALGASRKMLSETSNPEDLIQTSSTEQLRTIIRYLLDTLLSLLHASNGHSVPAVLQSTFHAQACEELFKHLCISGTPKIRLHTGLLLVQLCGGERWWGQFLSNVLQELYNSEQLLIFPQDRVFMLLSCIGQRSLSNSGVLESLLNLLDNLLSPLQPQLPMHRRTEGVLDIPMISWVVMLVSRLLDYVATVEDEAAAAKKPLNGNQWSFINNNLHTQSLNRSSKGSSSLDRLYSRKIRKQLVHHKQQLNLLKAKQKALVEQMEKEKIQSNKGSSYKLLVEQAKLKQATSKHFKDLIRLRRTAEWSRSNLDTEVTTAKESPEIEPLPFTLAHERCISVVQKLVLFLLSMDFTCHADLLLFVCKVLARIANATRPTIHLCEIVNEPQLERLLLLLVGTDFNRGDISWGGAWAQYSLTCMLQDILAGELLAPVAAEAMEEGTVGDDVGATAGDSDDSLQQSSVQLLETIDEPLTHDITGAPPLSSLEKDKEIDLELLQDLMEVDIDPLDIDLEKDPLAAKVFKPISSTWYDYWGADYGTYNYNPYIGGLGIPVAKPPANTEKNGSQTVSVSVSQALDARLEVGLEQQAELMLKMMSTLEADSILQALTNTSPTLSQSPTGTDDSLLGGLQAANQTSQLIIQLSSVPMLNVCFNKLFSMLQVHHVQLESLLQLWLTLSLNSSSTGNKENGADIFLYNANRIPVISLNQASITSFLTVLAWYPNTLLRTWCLVLHSLTLMTNMQLNSGSSSAIGTQESTAHLLVSDPNLIHVLVKFLSGTSPHGTNQHSPQVGPTATQAMQEFLTRLQVHLSSTCPQIFSEFLLKLIHILSTERGAFQTGQGPLDAQVKLLEFTLEQNFEVVSVSTISAVIESVTFLVHHYITCSDKVMSRSGSDSSVGARACFGGLFANLIRPGDAKAVCGEMTRDQLMFDLLKLVNILVQLPLSGNREYSARVSVTTNTTDSVSDEEKVSGGKDGNGSSTSVQGSPAYVADLVLANQQIMSQILSALGLCNSSAMAMIIGASGLHLTKHENFHGGLDAISVGDGLFTILTTLSKKASTVHMMLQPILTYMACGYMGRQGSLATCQLSEPLLWFILRVLDTSDALKAFHDMGGVQLICNNMVTSTRAIVNTARSMVSTIMKFLDSGPNKAVDSTLKTRILASEPDNAEGIHNFAPLGTITSSSPTAQPAEVLLQATPPHRRARSAAWSYIFLPEEAWCDLTIHLPAAVLLKEIHIQPHLASLATCPSSVSVEVSADGVNMLPLSTPVVTSGLTYIKIQLVKAEVASAVCLRLHRPRDASTLGLSQIKLLGLTAFGTTSSATVNNPFLPSEDQVSKTSIGWLRLLHHCLTHISDLEGMMASAAAPTANLLQTCAALLMSPYCGMHSPNIEVVLVKIGLQSTRIGLKLIDILLRNCAASGSDPTDLNSPLLFGRLNGLSSDSTIDILYQLGTTQDPGTKDRIQALLKWVSDSARVAAMKRSGRMNYMCPNSSTVEYGLLMPSPSHLHCVAAILWHSYELLVEYDLPALLDQELFELLFNWSMSLPCNMVLKKAVDSLLCSMCHVHPNYFSLLMGWMGITPPPVQCHHRLSMTDDSKKQDLSSSLTDDSKNAQAPLALTESHLATLASSSQSPEAIKQLLDSGLPSLLVRSLASFCFSHISSSESIAQSIDISQDKLRRHHVPQQCNKMPITADLVAPILRFLTEVGNSHIMKDWLGGSEVNPLWTALLFLLCHSGSTSGSHNLGAQQTSARSASLSSAATTGLTTQQRTAIENATVAFFLQCISCHPNNQKLMAQVLCELFQTSPQRGNLPTSGNISGFIRRLFLQLMLEDEKVTMFLQSPCPLYKGRINATSHVIQHPMYGAGHKFRTLHLPVSTTLSDVLDRVSDTPSITAKLISEQKDDKEKKNHEEKEKVKAENGFQDNYSVVVASGLKSQSKRAVSATPPRPPSRRGRTIPDKIGSTSGAEAANKIITVPVFHLFHKLLAGQPLPAEMTLAQLLTLLYDRKLPQGYRSIDLTVKLGSRVITDPSLSKTDSYKRLHPEKDHGDLLASCPEDEALTPGDECMDGILDESLLETCPIQSPLQVFAGMGGLALIAERLPMLYPEVIQQVSAPVVTSTTQEKPKDSDQFEWVTIEQSGELVYEAPETVAAEPPPIKSAVQTMSPIPAHSLAAFGLFLRLPGYAEVLLKERKHAQCLLRLVLGVTDDGEGSHILQSPSANVLPTLPFHVLRSLFSTTPLTTDDGVLLRRMALEIGALHLILVCLSALSHHSPRVPNSSVNQTEPQVSSSHNPTSTEEQQLYWAKGTGFGTGSTASGWDVEQALTKQRLEEEHVTCLLQVLASYINPVSSAVNGEAQSSHETRGQNSNALPSVLLELLSQSCLIPAMSSYLRNDSVLDMARHVPLYRALLELLRAIASCAAMVPLLLPLSTENGEEEEEQSECQTSVGTLLAKMKTCVDTYTNRLRSKRENVKTGVKPDASDQEPEGLTLLVPDIQKTAEIVYAATTSLRQANQEKKLGEYSKKAAMKPKPLSVLKSLEEKYVAVMKKLQFDTFEMVSEDEDGKLGFKVNYHYMSQVKNANDANSAARARRLAQEAVTLSTSLPLSSSSSVFVRCDEERLDIMKVLITGPADTPYANGCFEFDVYFPQDYPSSPPLVNLETTGGHSVRFNPNLYNDGKVCLSILNTWHGRPEEKWNPQTSSFLQVLVSVQSLILVAEPYFNEPGYERSRGTPSGTQSSREYDGNIRQATVKWAMLEQIRNPSPCFKEVIHKHFYLKRVEIMAQCEEWIADIQQYSSDKRVGRTMSHHAAALKRHTAQLREELLKLPCPEGLDPDTDDAPEVCRATTGAEETLMHDQVKPSSSKELPSDFQL</sequence>
<proteinExistence type="evidence at protein level"/>
<reference key="1">
    <citation type="journal article" date="2005" name="Nature">
        <title>Generation and annotation of the DNA sequences of human chromosomes 2 and 4.</title>
        <authorList>
            <person name="Hillier L.W."/>
            <person name="Graves T.A."/>
            <person name="Fulton R.S."/>
            <person name="Fulton L.A."/>
            <person name="Pepin K.H."/>
            <person name="Minx P."/>
            <person name="Wagner-McPherson C."/>
            <person name="Layman D."/>
            <person name="Wylie K."/>
            <person name="Sekhon M."/>
            <person name="Becker M.C."/>
            <person name="Fewell G.A."/>
            <person name="Delehaunty K.D."/>
            <person name="Miner T.L."/>
            <person name="Nash W.E."/>
            <person name="Kremitzki C."/>
            <person name="Oddy L."/>
            <person name="Du H."/>
            <person name="Sun H."/>
            <person name="Bradshaw-Cordum H."/>
            <person name="Ali J."/>
            <person name="Carter J."/>
            <person name="Cordes M."/>
            <person name="Harris A."/>
            <person name="Isak A."/>
            <person name="van Brunt A."/>
            <person name="Nguyen C."/>
            <person name="Du F."/>
            <person name="Courtney L."/>
            <person name="Kalicki J."/>
            <person name="Ozersky P."/>
            <person name="Abbott S."/>
            <person name="Armstrong J."/>
            <person name="Belter E.A."/>
            <person name="Caruso L."/>
            <person name="Cedroni M."/>
            <person name="Cotton M."/>
            <person name="Davidson T."/>
            <person name="Desai A."/>
            <person name="Elliott G."/>
            <person name="Erb T."/>
            <person name="Fronick C."/>
            <person name="Gaige T."/>
            <person name="Haakenson W."/>
            <person name="Haglund K."/>
            <person name="Holmes A."/>
            <person name="Harkins R."/>
            <person name="Kim K."/>
            <person name="Kruchowski S.S."/>
            <person name="Strong C.M."/>
            <person name="Grewal N."/>
            <person name="Goyea E."/>
            <person name="Hou S."/>
            <person name="Levy A."/>
            <person name="Martinka S."/>
            <person name="Mead K."/>
            <person name="McLellan M.D."/>
            <person name="Meyer R."/>
            <person name="Randall-Maher J."/>
            <person name="Tomlinson C."/>
            <person name="Dauphin-Kohlberg S."/>
            <person name="Kozlowicz-Reilly A."/>
            <person name="Shah N."/>
            <person name="Swearengen-Shahid S."/>
            <person name="Snider J."/>
            <person name="Strong J.T."/>
            <person name="Thompson J."/>
            <person name="Yoakum M."/>
            <person name="Leonard S."/>
            <person name="Pearman C."/>
            <person name="Trani L."/>
            <person name="Radionenko M."/>
            <person name="Waligorski J.E."/>
            <person name="Wang C."/>
            <person name="Rock S.M."/>
            <person name="Tin-Wollam A.-M."/>
            <person name="Maupin R."/>
            <person name="Latreille P."/>
            <person name="Wendl M.C."/>
            <person name="Yang S.-P."/>
            <person name="Pohl C."/>
            <person name="Wallis J.W."/>
            <person name="Spieth J."/>
            <person name="Bieri T.A."/>
            <person name="Berkowicz N."/>
            <person name="Nelson J.O."/>
            <person name="Osborne J."/>
            <person name="Ding L."/>
            <person name="Meyer R."/>
            <person name="Sabo A."/>
            <person name="Shotland Y."/>
            <person name="Sinha P."/>
            <person name="Wohldmann P.E."/>
            <person name="Cook L.L."/>
            <person name="Hickenbotham M.T."/>
            <person name="Eldred J."/>
            <person name="Williams D."/>
            <person name="Jones T.A."/>
            <person name="She X."/>
            <person name="Ciccarelli F.D."/>
            <person name="Izaurralde E."/>
            <person name="Taylor J."/>
            <person name="Schmutz J."/>
            <person name="Myers R.M."/>
            <person name="Cox D.R."/>
            <person name="Huang X."/>
            <person name="McPherson J.D."/>
            <person name="Mardis E.R."/>
            <person name="Clifton S.W."/>
            <person name="Warren W.C."/>
            <person name="Chinwalla A.T."/>
            <person name="Eddy S.R."/>
            <person name="Marra M.A."/>
            <person name="Ovcharenko I."/>
            <person name="Furey T.S."/>
            <person name="Miller W."/>
            <person name="Eichler E.E."/>
            <person name="Bork P."/>
            <person name="Suyama M."/>
            <person name="Torrents D."/>
            <person name="Waterston R.H."/>
            <person name="Wilson R.K."/>
        </authorList>
    </citation>
    <scope>NUCLEOTIDE SEQUENCE [LARGE SCALE GENOMIC DNA]</scope>
</reference>
<reference key="2">
    <citation type="journal article" date="1999" name="Biochem. Biophys. Res. Commun.">
        <title>A human IAP-family gene, apollon, expressed in human brain cancer cells.</title>
        <authorList>
            <person name="Chen Z."/>
            <person name="Naito M."/>
            <person name="Hori S."/>
            <person name="Mashima T."/>
            <person name="Yamori T."/>
            <person name="Tsuruo T."/>
        </authorList>
    </citation>
    <scope>NUCLEOTIDE SEQUENCE [MRNA] OF 29-4857</scope>
    <source>
        <tissue>Brain</tissue>
    </source>
</reference>
<reference key="3">
    <citation type="journal article" date="1999" name="DNA Res.">
        <title>Prediction of the coding sequences of unidentified human genes. XV. The complete sequences of 100 new cDNA clones from brain which code for large proteins in vitro.</title>
        <authorList>
            <person name="Nagase T."/>
            <person name="Ishikawa K."/>
            <person name="Kikuno R."/>
            <person name="Hirosawa M."/>
            <person name="Nomura N."/>
            <person name="Ohara O."/>
        </authorList>
    </citation>
    <scope>NUCLEOTIDE SEQUENCE [LARGE SCALE MRNA] OF 2063-4857</scope>
    <source>
        <tissue>Brain</tissue>
    </source>
</reference>
<reference key="4">
    <citation type="journal article" date="2002" name="DNA Res.">
        <title>Construction of expression-ready cDNA clones for KIAA genes: manual curation of 330 KIAA cDNA clones.</title>
        <authorList>
            <person name="Nakajima D."/>
            <person name="Okazaki N."/>
            <person name="Yamakawa H."/>
            <person name="Kikuno R."/>
            <person name="Ohara O."/>
            <person name="Nagase T."/>
        </authorList>
    </citation>
    <scope>SEQUENCE REVISION</scope>
</reference>
<reference key="5">
    <citation type="journal article" date="2004" name="EMBO J.">
        <title>Nrdp1-mediated degradation of the gigantic IAP, BRUCE, is a novel pathway for triggering apoptosis.</title>
        <authorList>
            <person name="Qiu X.B."/>
            <person name="Markant S.L."/>
            <person name="Yuan J."/>
            <person name="Goldberg A.L."/>
        </authorList>
    </citation>
    <scope>INTERACTION WITH RNF41</scope>
    <scope>UBIQUITINATION</scope>
    <scope>FUNCTION</scope>
</reference>
<reference key="6">
    <citation type="journal article" date="2004" name="Mol. Cell">
        <title>Dual role of BRUCE as an antiapoptotic IAP and a chimeric E2/E3 ubiquitin ligase.</title>
        <authorList>
            <person name="Bartke T."/>
            <person name="Pohl C."/>
            <person name="Pyrowolakis G."/>
            <person name="Jentsch S."/>
        </authorList>
    </citation>
    <scope>FUNCTION</scope>
    <scope>SUBUNIT</scope>
    <scope>ACTIVITY REGULATION</scope>
    <scope>DOMAIN BIR</scope>
    <scope>INTERACTION WITH HTRA2; CASP3; CASP6; CASP7; CASP9 AND DIABLO/SMAC</scope>
</reference>
<reference key="7">
    <citation type="journal article" date="2004" name="Nat. Cell Biol.">
        <title>An Apollon vista of death and destruction.</title>
        <authorList>
            <person name="Martin S.J."/>
        </authorList>
    </citation>
    <scope>REVIEW ON FUNCTION</scope>
</reference>
<reference key="8">
    <citation type="journal article" date="2006" name="Cell">
        <title>Global, in vivo, and site-specific phosphorylation dynamics in signaling networks.</title>
        <authorList>
            <person name="Olsen J.V."/>
            <person name="Blagoev B."/>
            <person name="Gnad F."/>
            <person name="Macek B."/>
            <person name="Kumar C."/>
            <person name="Mortensen P."/>
            <person name="Mann M."/>
        </authorList>
    </citation>
    <scope>IDENTIFICATION BY MASS SPECTROMETRY [LARGE SCALE ANALYSIS]</scope>
    <source>
        <tissue>Cervix carcinoma</tissue>
    </source>
</reference>
<reference key="9">
    <citation type="journal article" date="2008" name="Cell">
        <title>Final stages of cytokinesis and midbody ring formation are controlled by BRUCE.</title>
        <authorList>
            <person name="Pohl C."/>
            <person name="Jentsch S."/>
        </authorList>
    </citation>
    <scope>FUNCTION</scope>
    <scope>SUBCELLULAR LOCATION</scope>
    <scope>PHOSPHORYLATION</scope>
    <scope>UBIQUITINATION</scope>
    <scope>DEUBIQUITINATION</scope>
    <scope>INTERACTION WITH KIF23/MKLP1; USP8/UBPY; BIRC5/SURVIVIN; MAP2K1/MEK1; RAB8A/RAB8; RAB11A/RAB11; PLK1; EXOC3/SEC6 AND EXOC4/SEC8</scope>
</reference>
<reference key="10">
    <citation type="journal article" date="2008" name="Cell Cycle">
        <title>IAPs: more than just inhibitors of apoptosis proteins.</title>
        <authorList>
            <person name="Dubrez-Daloz L."/>
            <person name="Dupoux A."/>
            <person name="Cartier J."/>
        </authorList>
    </citation>
    <scope>REVIEW ON FUNCTION</scope>
</reference>
<reference key="11">
    <citation type="journal article" date="2008" name="Proc. Natl. Acad. Sci. U.S.A.">
        <title>A quantitative atlas of mitotic phosphorylation.</title>
        <authorList>
            <person name="Dephoure N."/>
            <person name="Zhou C."/>
            <person name="Villen J."/>
            <person name="Beausoleil S.A."/>
            <person name="Bakalarski C.E."/>
            <person name="Elledge S.J."/>
            <person name="Gygi S.P."/>
        </authorList>
    </citation>
    <scope>PHOSPHORYLATION [LARGE SCALE ANALYSIS] AT SER-480</scope>
    <scope>IDENTIFICATION BY MASS SPECTROMETRY [LARGE SCALE ANALYSIS]</scope>
    <source>
        <tissue>Cervix carcinoma</tissue>
    </source>
</reference>
<reference key="12">
    <citation type="journal article" date="2009" name="Mol. Cell. Proteomics">
        <title>Large-scale proteomics analysis of the human kinome.</title>
        <authorList>
            <person name="Oppermann F.S."/>
            <person name="Gnad F."/>
            <person name="Olsen J.V."/>
            <person name="Hornberger R."/>
            <person name="Greff Z."/>
            <person name="Keri G."/>
            <person name="Mann M."/>
            <person name="Daub H."/>
        </authorList>
    </citation>
    <scope>IDENTIFICATION BY MASS SPECTROMETRY [LARGE SCALE ANALYSIS]</scope>
</reference>
<reference key="13">
    <citation type="journal article" date="2010" name="Sci. Signal.">
        <title>Quantitative phosphoproteomics reveals widespread full phosphorylation site occupancy during mitosis.</title>
        <authorList>
            <person name="Olsen J.V."/>
            <person name="Vermeulen M."/>
            <person name="Santamaria A."/>
            <person name="Kumar C."/>
            <person name="Miller M.L."/>
            <person name="Jensen L.J."/>
            <person name="Gnad F."/>
            <person name="Cox J."/>
            <person name="Jensen T.S."/>
            <person name="Nigg E.A."/>
            <person name="Brunak S."/>
            <person name="Mann M."/>
        </authorList>
    </citation>
    <scope>PHOSPHORYLATION [LARGE SCALE ANALYSIS] AT SER-480</scope>
    <scope>IDENTIFICATION BY MASS SPECTROMETRY [LARGE SCALE ANALYSIS]</scope>
    <source>
        <tissue>Cervix carcinoma</tissue>
    </source>
</reference>
<reference key="14">
    <citation type="journal article" date="2011" name="BMC Syst. Biol.">
        <title>Initial characterization of the human central proteome.</title>
        <authorList>
            <person name="Burkard T.R."/>
            <person name="Planyavsky M."/>
            <person name="Kaupe I."/>
            <person name="Breitwieser F.P."/>
            <person name="Buerckstuemmer T."/>
            <person name="Bennett K.L."/>
            <person name="Superti-Furga G."/>
            <person name="Colinge J."/>
        </authorList>
    </citation>
    <scope>IDENTIFICATION BY MASS SPECTROMETRY [LARGE SCALE ANALYSIS]</scope>
</reference>
<reference key="15">
    <citation type="journal article" date="2011" name="Sci. Signal.">
        <title>System-wide temporal characterization of the proteome and phosphoproteome of human embryonic stem cell differentiation.</title>
        <authorList>
            <person name="Rigbolt K.T."/>
            <person name="Prokhorova T.A."/>
            <person name="Akimov V."/>
            <person name="Henningsen J."/>
            <person name="Johansen P.T."/>
            <person name="Kratchmarova I."/>
            <person name="Kassem M."/>
            <person name="Mann M."/>
            <person name="Olsen J.V."/>
            <person name="Blagoev B."/>
        </authorList>
    </citation>
    <scope>PHOSPHORYLATION [LARGE SCALE ANALYSIS] AT SER-480</scope>
    <scope>IDENTIFICATION BY MASS SPECTROMETRY [LARGE SCALE ANALYSIS]</scope>
</reference>
<reference key="16">
    <citation type="journal article" date="2013" name="J. Proteome Res.">
        <title>Toward a comprehensive characterization of a human cancer cell phosphoproteome.</title>
        <authorList>
            <person name="Zhou H."/>
            <person name="Di Palma S."/>
            <person name="Preisinger C."/>
            <person name="Peng M."/>
            <person name="Polat A.N."/>
            <person name="Heck A.J."/>
            <person name="Mohammed S."/>
        </authorList>
    </citation>
    <scope>PHOSPHORYLATION [LARGE SCALE ANALYSIS] AT SER-480; SER-581; SER-590; SER-2222; SER-2955; THR-3931 AND SER-4023</scope>
    <scope>IDENTIFICATION BY MASS SPECTROMETRY [LARGE SCALE ANALYSIS]</scope>
    <source>
        <tissue>Cervix carcinoma</tissue>
        <tissue>Erythroleukemia</tissue>
    </source>
</reference>
<reference key="17">
    <citation type="journal article" date="2014" name="J. Proteomics">
        <title>An enzyme assisted RP-RPLC approach for in-depth analysis of human liver phosphoproteome.</title>
        <authorList>
            <person name="Bian Y."/>
            <person name="Song C."/>
            <person name="Cheng K."/>
            <person name="Dong M."/>
            <person name="Wang F."/>
            <person name="Huang J."/>
            <person name="Sun D."/>
            <person name="Wang L."/>
            <person name="Ye M."/>
            <person name="Zou H."/>
        </authorList>
    </citation>
    <scope>PHOSPHORYLATION [LARGE SCALE ANALYSIS] AT SER-480 AND THR-1710</scope>
    <scope>IDENTIFICATION BY MASS SPECTROMETRY [LARGE SCALE ANALYSIS]</scope>
    <source>
        <tissue>Liver</tissue>
    </source>
</reference>
<reference key="18">
    <citation type="journal article" date="2014" name="Mol. Cell. Proteomics">
        <title>Immunoaffinity enrichment and mass spectrometry analysis of protein methylation.</title>
        <authorList>
            <person name="Guo A."/>
            <person name="Gu H."/>
            <person name="Zhou J."/>
            <person name="Mulhern D."/>
            <person name="Wang Y."/>
            <person name="Lee K.A."/>
            <person name="Yang V."/>
            <person name="Aguiar M."/>
            <person name="Kornhauser J."/>
            <person name="Jia X."/>
            <person name="Ren J."/>
            <person name="Beausoleil S.A."/>
            <person name="Silva J.C."/>
            <person name="Vemulapalli V."/>
            <person name="Bedford M.T."/>
            <person name="Comb M.J."/>
        </authorList>
    </citation>
    <scope>IDENTIFICATION BY MASS SPECTROMETRY [LARGE SCALE ANALYSIS]</scope>
    <source>
        <tissue>Colon carcinoma</tissue>
    </source>
</reference>
<reference key="19">
    <citation type="submission" date="2008-04" db="PDB data bank">
        <title>Ubc domain of the ubiquitin-protein ligase baculoviral IAP repeat-containing protein 6.</title>
        <authorList>
            <consortium name="Structural genomics consortium (SGC)"/>
        </authorList>
    </citation>
    <scope>X-RAY CRYSTALLOGRAPHY (2.01 ANGSTROMS) OF 4498-4820</scope>
</reference>
<reference evidence="16" key="20">
    <citation type="journal article" date="2012" name="Mol. Cell. Proteomics">
        <title>A human ubiquitin conjugating enzyme (E2)-HECT E3 ligase structure-function screen.</title>
        <authorList>
            <person name="Sheng Y."/>
            <person name="Hong J.H."/>
            <person name="Doherty R."/>
            <person name="Srikumar T."/>
            <person name="Shloush J."/>
            <person name="Avvakumov G.V."/>
            <person name="Walker J.R."/>
            <person name="Xue S."/>
            <person name="Neculai D."/>
            <person name="Wan J.W."/>
            <person name="Kim S.K."/>
            <person name="Arrowsmith C.H."/>
            <person name="Raught B."/>
            <person name="Dhe-Paganon S."/>
        </authorList>
    </citation>
    <scope>X-RAY CRYSTALLOGRAPHY (2.01 ANGSTROMS) OF 4498-4820</scope>
</reference>
<reference evidence="23 24 25 26 27 28 29" key="21">
    <citation type="journal article" date="2023" name="Science">
        <title>Structures of BIRC6-client complexes provide a mechanism of SMAC-mediated release of caspases.</title>
        <authorList>
            <person name="Hunkeler M."/>
            <person name="Jin C.Y."/>
            <person name="Fischer E.S."/>
        </authorList>
    </citation>
    <scope>STRUCTURE BY ELECTRON MICROSCOPY (1.98 ANGSTROMS) OF BIRC6 ALONE AND IN COMPLEX WITH DIABLO/SMAC; CASP3; CASP7 AND HTRA2 MUTANT A-306</scope>
    <scope>FUNCTION</scope>
    <scope>CATALYTIC ACTIVITY</scope>
    <scope>ACTIVITY REGULATION</scope>
    <scope>SUBUNIT</scope>
    <scope>INTERACTION WITH DIABLO</scope>
    <scope>AUTOUBIQUITINATION</scope>
    <scope>PROTEOLYTIC CLEAVAGE</scope>
    <scope>WD REPEATS</scope>
    <scope>MUTAGENESIS OF CYS-328; CYS-331 AND 1616-ALA--ALA-1666</scope>
</reference>
<reference evidence="17 18" key="22">
    <citation type="journal article" date="2023" name="Science">
        <title>Structural basis for SMAC-mediated antagonism of caspase inhibition by the giant ubiquitin ligase BIRC6.</title>
        <authorList>
            <person name="Dietz L."/>
            <person name="Ellison C.J."/>
            <person name="Riechmann C."/>
            <person name="Cassidy C.K."/>
            <person name="Felfoldi F.D."/>
            <person name="Pinto-Fernandez A."/>
            <person name="Kessler B.M."/>
            <person name="Elliott P.R."/>
        </authorList>
    </citation>
    <scope>STRUCTURE BY ELECTRON MICROSCOPY (3.00 ANGSTROMS) OF BIRC6 ALONE AND IN COMPLEX WITH DIABLO</scope>
    <scope>FUNCTION</scope>
    <scope>CATALYTIC ACTIVITY</scope>
    <scope>ACTIVITY REGULATION</scope>
    <scope>SUBUNIT</scope>
    <scope>INTERACTION WITH DIABLO</scope>
    <scope>AUTOUBIQUITINATION</scope>
    <scope>WD REPEATS</scope>
    <scope>MUTAGENESIS OF ASP-342; HIS-351 AND 3189-HIS--ARG-3193</scope>
</reference>
<reference evidence="19 20 21 22" key="23">
    <citation type="journal article" date="2023" name="Science">
        <title>Structural basis for regulation of apoptosis and autophagy by the BIRC6/SMAC complex.</title>
        <authorList>
            <person name="Ehrmann J.F."/>
            <person name="Grabarczyk D.B."/>
            <person name="Heinke M."/>
            <person name="Deszcz L."/>
            <person name="Kurzbauer R."/>
            <person name="Hudecz O."/>
            <person name="Shulkina A."/>
            <person name="Gogova R."/>
            <person name="Meinhart A."/>
            <person name="Versteeg G.A."/>
            <person name="Clausen T."/>
        </authorList>
    </citation>
    <scope>STRUCTURE BY ELECTRON MICROSCOPY (3.30 ANGSTROMS) IN COMPLEX WITH ZINC; HTRA2 AND DIABLO</scope>
    <scope>FUNCTION</scope>
    <scope>CATALYTIC ACTIVITY</scope>
    <scope>ACTIVITY REGULATION</scope>
    <scope>SUBUNIT</scope>
    <scope>INTERACTION WITH DIABLO</scope>
    <scope>AUTOUBIQUITINATION</scope>
    <scope>PROTEOLYTIC CLEAVAGE</scope>
    <scope>WD REPEATS</scope>
    <scope>MUTAGENESIS OF ASP-342; HIS-351; 2228-SER--THR-2295; 3190-ARG--ARG-3193; 4094-VAL--SER-4145 AND CYS-4666</scope>
</reference>
<dbReference type="EC" id="2.3.2.24" evidence="7 8 9"/>
<dbReference type="EMBL" id="AC079837">
    <property type="status" value="NOT_ANNOTATED_CDS"/>
    <property type="molecule type" value="Genomic_DNA"/>
</dbReference>
<dbReference type="EMBL" id="AL133243">
    <property type="status" value="NOT_ANNOTATED_CDS"/>
    <property type="molecule type" value="Genomic_DNA"/>
</dbReference>
<dbReference type="EMBL" id="AL133245">
    <property type="status" value="NOT_ANNOTATED_CDS"/>
    <property type="molecule type" value="Genomic_DNA"/>
</dbReference>
<dbReference type="EMBL" id="AL133246">
    <property type="status" value="NOT_ANNOTATED_CDS"/>
    <property type="molecule type" value="Genomic_DNA"/>
</dbReference>
<dbReference type="EMBL" id="AF265555">
    <property type="protein sequence ID" value="AAF75772.1"/>
    <property type="molecule type" value="mRNA"/>
</dbReference>
<dbReference type="EMBL" id="AB033115">
    <property type="protein sequence ID" value="BAA86603.2"/>
    <property type="status" value="ALT_FRAME"/>
    <property type="molecule type" value="mRNA"/>
</dbReference>
<dbReference type="CCDS" id="CCDS33175.2"/>
<dbReference type="RefSeq" id="NP_057336.3">
    <property type="nucleotide sequence ID" value="NM_016252.4"/>
</dbReference>
<dbReference type="PDB" id="3CEG">
    <property type="method" value="X-ray"/>
    <property type="resolution" value="2.01 A"/>
    <property type="chains" value="A/B=4498-4820"/>
</dbReference>
<dbReference type="PDB" id="8ATM">
    <property type="method" value="EM"/>
    <property type="resolution" value="3.30 A"/>
    <property type="chains" value="A/B=1-4857"/>
</dbReference>
<dbReference type="PDB" id="8ATO">
    <property type="method" value="EM"/>
    <property type="resolution" value="3.00 A"/>
    <property type="chains" value="A/B=1-4857"/>
</dbReference>
<dbReference type="PDB" id="8ATU">
    <property type="method" value="EM"/>
    <property type="resolution" value="3.30 A"/>
    <property type="chains" value="A/B=1-4857"/>
</dbReference>
<dbReference type="PDB" id="8ATX">
    <property type="method" value="EM"/>
    <property type="resolution" value="7.00 A"/>
    <property type="chains" value="A/B=1-4857"/>
</dbReference>
<dbReference type="PDB" id="8AUK">
    <property type="method" value="EM"/>
    <property type="resolution" value="6.20 A"/>
    <property type="chains" value="A/B=1-4857"/>
</dbReference>
<dbReference type="PDB" id="8AUW">
    <property type="method" value="EM"/>
    <property type="resolution" value="7.20 A"/>
    <property type="chains" value="A/B=1-4857"/>
</dbReference>
<dbReference type="PDB" id="8E2D">
    <property type="method" value="EM"/>
    <property type="resolution" value="2.07 A"/>
    <property type="chains" value="A/B=1-4857"/>
</dbReference>
<dbReference type="PDB" id="8E2E">
    <property type="method" value="EM"/>
    <property type="resolution" value="1.98 A"/>
    <property type="chains" value="A/B=1-4857"/>
</dbReference>
<dbReference type="PDB" id="8E2F">
    <property type="method" value="EM"/>
    <property type="resolution" value="2.47 A"/>
    <property type="chains" value="A=1-4857"/>
</dbReference>
<dbReference type="PDB" id="8E2G">
    <property type="method" value="EM"/>
    <property type="resolution" value="2.99 A"/>
    <property type="chains" value="A=1-4857"/>
</dbReference>
<dbReference type="PDB" id="8E2H">
    <property type="method" value="EM"/>
    <property type="resolution" value="2.30 A"/>
    <property type="chains" value="A=1-4857"/>
</dbReference>
<dbReference type="PDB" id="8E2I">
    <property type="method" value="EM"/>
    <property type="resolution" value="3.04 A"/>
    <property type="chains" value="A/B=1-4857"/>
</dbReference>
<dbReference type="PDB" id="8E2K">
    <property type="method" value="EM"/>
    <property type="resolution" value="3.21 A"/>
    <property type="chains" value="A/B=1-4857"/>
</dbReference>
<dbReference type="PDBsum" id="3CEG"/>
<dbReference type="PDBsum" id="8ATM"/>
<dbReference type="PDBsum" id="8ATO"/>
<dbReference type="PDBsum" id="8ATU"/>
<dbReference type="PDBsum" id="8ATX"/>
<dbReference type="PDBsum" id="8AUK"/>
<dbReference type="PDBsum" id="8AUW"/>
<dbReference type="PDBsum" id="8E2D"/>
<dbReference type="PDBsum" id="8E2E"/>
<dbReference type="PDBsum" id="8E2F"/>
<dbReference type="PDBsum" id="8E2G"/>
<dbReference type="PDBsum" id="8E2H"/>
<dbReference type="PDBsum" id="8E2I"/>
<dbReference type="PDBsum" id="8E2K"/>
<dbReference type="EMDB" id="EMD-15648"/>
<dbReference type="EMDB" id="EMD-15650"/>
<dbReference type="EMDB" id="EMD-15651"/>
<dbReference type="EMDB" id="EMD-15652"/>
<dbReference type="EMDB" id="EMD-15653"/>
<dbReference type="EMDB" id="EMD-15654"/>
<dbReference type="EMDB" id="EMD-15663"/>
<dbReference type="EMDB" id="EMD-15668"/>
<dbReference type="EMDB" id="EMD-15672"/>
<dbReference type="EMDB" id="EMD-15675"/>
<dbReference type="EMDB" id="EMD-27832"/>
<dbReference type="EMDB" id="EMD-27833"/>
<dbReference type="EMDB" id="EMD-27834"/>
<dbReference type="EMDB" id="EMD-27835"/>
<dbReference type="EMDB" id="EMD-27836"/>
<dbReference type="EMDB" id="EMD-27837"/>
<dbReference type="EMDB" id="EMD-27839"/>
<dbReference type="EMDB" id="EMD-27840"/>
<dbReference type="EMDB" id="EMD-27841"/>
<dbReference type="SMR" id="Q9NR09"/>
<dbReference type="BioGRID" id="121521">
    <property type="interactions" value="281"/>
</dbReference>
<dbReference type="FunCoup" id="Q9NR09">
    <property type="interactions" value="5068"/>
</dbReference>
<dbReference type="IntAct" id="Q9NR09">
    <property type="interactions" value="125"/>
</dbReference>
<dbReference type="MINT" id="Q9NR09"/>
<dbReference type="STRING" id="9606.ENSP00000393596"/>
<dbReference type="MEROPS" id="I32.006"/>
<dbReference type="TCDB" id="8.A.217.1.1">
    <property type="family name" value="the apoptosis cell death regulator (acdr) family"/>
</dbReference>
<dbReference type="GlyCosmos" id="Q9NR09">
    <property type="glycosylation" value="1 site, 1 glycan"/>
</dbReference>
<dbReference type="GlyGen" id="Q9NR09">
    <property type="glycosylation" value="9 sites, 1 N-linked glycan (1 site), 1 O-linked glycan (5 sites)"/>
</dbReference>
<dbReference type="iPTMnet" id="Q9NR09"/>
<dbReference type="PhosphoSitePlus" id="Q9NR09"/>
<dbReference type="SwissPalm" id="Q9NR09"/>
<dbReference type="BioMuta" id="BIRC6"/>
<dbReference type="DMDM" id="313104079"/>
<dbReference type="jPOST" id="Q9NR09"/>
<dbReference type="MassIVE" id="Q9NR09"/>
<dbReference type="PaxDb" id="9606-ENSP00000393596"/>
<dbReference type="PeptideAtlas" id="Q9NR09"/>
<dbReference type="ProteomicsDB" id="82241"/>
<dbReference type="Pumba" id="Q9NR09"/>
<dbReference type="Antibodypedia" id="29188">
    <property type="antibodies" value="216 antibodies from 31 providers"/>
</dbReference>
<dbReference type="DNASU" id="57448"/>
<dbReference type="Ensembl" id="ENST00000421745.7">
    <property type="protein sequence ID" value="ENSP00000393596.2"/>
    <property type="gene ID" value="ENSG00000115760.16"/>
</dbReference>
<dbReference type="GeneID" id="57448"/>
<dbReference type="KEGG" id="hsa:57448"/>
<dbReference type="MANE-Select" id="ENST00000421745.7">
    <property type="protein sequence ID" value="ENSP00000393596.2"/>
    <property type="RefSeq nucleotide sequence ID" value="NM_016252.4"/>
    <property type="RefSeq protein sequence ID" value="NP_057336.3"/>
</dbReference>
<dbReference type="UCSC" id="uc010ezu.4">
    <property type="organism name" value="human"/>
</dbReference>
<dbReference type="AGR" id="HGNC:13516"/>
<dbReference type="CTD" id="57448"/>
<dbReference type="DisGeNET" id="57448"/>
<dbReference type="GeneCards" id="BIRC6"/>
<dbReference type="HGNC" id="HGNC:13516">
    <property type="gene designation" value="BIRC6"/>
</dbReference>
<dbReference type="HPA" id="ENSG00000115760">
    <property type="expression patterns" value="Low tissue specificity"/>
</dbReference>
<dbReference type="MalaCards" id="BIRC6"/>
<dbReference type="MIM" id="605638">
    <property type="type" value="gene"/>
</dbReference>
<dbReference type="neXtProt" id="NX_Q9NR09"/>
<dbReference type="OpenTargets" id="ENSG00000115760"/>
<dbReference type="PharmGKB" id="PA25363"/>
<dbReference type="VEuPathDB" id="HostDB:ENSG00000115760"/>
<dbReference type="eggNOG" id="KOG0895">
    <property type="taxonomic scope" value="Eukaryota"/>
</dbReference>
<dbReference type="eggNOG" id="KOG1101">
    <property type="taxonomic scope" value="Eukaryota"/>
</dbReference>
<dbReference type="GeneTree" id="ENSGT00940000156126"/>
<dbReference type="HOGENOM" id="CLU_000111_1_0_1"/>
<dbReference type="InParanoid" id="Q9NR09"/>
<dbReference type="OMA" id="TTWDEHV"/>
<dbReference type="OrthoDB" id="2196114at2759"/>
<dbReference type="PAN-GO" id="Q9NR09">
    <property type="GO annotations" value="4 GO annotations based on evolutionary models"/>
</dbReference>
<dbReference type="PhylomeDB" id="Q9NR09"/>
<dbReference type="TreeFam" id="TF105357"/>
<dbReference type="PathwayCommons" id="Q9NR09"/>
<dbReference type="Reactome" id="R-HSA-9700645">
    <property type="pathway name" value="ALK mutants bind TKIs"/>
</dbReference>
<dbReference type="Reactome" id="R-HSA-9725370">
    <property type="pathway name" value="Signaling by ALK fusions and activated point mutants"/>
</dbReference>
<dbReference type="SignaLink" id="Q9NR09"/>
<dbReference type="SIGNOR" id="Q9NR09"/>
<dbReference type="BioGRID-ORCS" id="57448">
    <property type="hits" value="223 hits in 1208 CRISPR screens"/>
</dbReference>
<dbReference type="ChiTaRS" id="BIRC6">
    <property type="organism name" value="human"/>
</dbReference>
<dbReference type="EvolutionaryTrace" id="Q9NR09"/>
<dbReference type="GeneWiki" id="BIRC6"/>
<dbReference type="GenomeRNAi" id="57448"/>
<dbReference type="Pharos" id="Q9NR09">
    <property type="development level" value="Tbio"/>
</dbReference>
<dbReference type="PRO" id="PR:Q9NR09"/>
<dbReference type="Proteomes" id="UP000005640">
    <property type="component" value="Chromosome 2"/>
</dbReference>
<dbReference type="RNAct" id="Q9NR09">
    <property type="molecule type" value="protein"/>
</dbReference>
<dbReference type="Bgee" id="ENSG00000115760">
    <property type="expression patterns" value="Expressed in epithelial cell of pancreas and 196 other cell types or tissues"/>
</dbReference>
<dbReference type="ExpressionAtlas" id="Q9NR09">
    <property type="expression patterns" value="baseline and differential"/>
</dbReference>
<dbReference type="GO" id="GO:0005813">
    <property type="term" value="C:centrosome"/>
    <property type="evidence" value="ECO:0007669"/>
    <property type="project" value="UniProtKB-SubCell"/>
</dbReference>
<dbReference type="GO" id="GO:0005829">
    <property type="term" value="C:cytosol"/>
    <property type="evidence" value="ECO:0000304"/>
    <property type="project" value="Reactome"/>
</dbReference>
<dbReference type="GO" id="GO:0005768">
    <property type="term" value="C:endosome"/>
    <property type="evidence" value="ECO:0000314"/>
    <property type="project" value="UniProtKB"/>
</dbReference>
<dbReference type="GO" id="GO:0090543">
    <property type="term" value="C:Flemming body"/>
    <property type="evidence" value="ECO:0007669"/>
    <property type="project" value="UniProtKB-SubCell"/>
</dbReference>
<dbReference type="GO" id="GO:0016020">
    <property type="term" value="C:membrane"/>
    <property type="evidence" value="ECO:0007005"/>
    <property type="project" value="UniProtKB"/>
</dbReference>
<dbReference type="GO" id="GO:0005815">
    <property type="term" value="C:microtubule organizing center"/>
    <property type="evidence" value="ECO:0000314"/>
    <property type="project" value="UniProtKB"/>
</dbReference>
<dbReference type="GO" id="GO:0030496">
    <property type="term" value="C:midbody"/>
    <property type="evidence" value="ECO:0000314"/>
    <property type="project" value="UniProtKB"/>
</dbReference>
<dbReference type="GO" id="GO:0005634">
    <property type="term" value="C:nucleus"/>
    <property type="evidence" value="ECO:0000318"/>
    <property type="project" value="GO_Central"/>
</dbReference>
<dbReference type="GO" id="GO:0000922">
    <property type="term" value="C:spindle pole"/>
    <property type="evidence" value="ECO:0000314"/>
    <property type="project" value="UniProtKB"/>
</dbReference>
<dbReference type="GO" id="GO:0005802">
    <property type="term" value="C:trans-Golgi network"/>
    <property type="evidence" value="ECO:0000314"/>
    <property type="project" value="UniProtKB"/>
</dbReference>
<dbReference type="GO" id="GO:0004869">
    <property type="term" value="F:cysteine-type endopeptidase inhibitor activity"/>
    <property type="evidence" value="ECO:0000315"/>
    <property type="project" value="UniProtKB"/>
</dbReference>
<dbReference type="GO" id="GO:0046872">
    <property type="term" value="F:metal ion binding"/>
    <property type="evidence" value="ECO:0007669"/>
    <property type="project" value="UniProtKB-KW"/>
</dbReference>
<dbReference type="GO" id="GO:0061631">
    <property type="term" value="F:ubiquitin conjugating enzyme activity"/>
    <property type="evidence" value="ECO:0000318"/>
    <property type="project" value="GO_Central"/>
</dbReference>
<dbReference type="GO" id="GO:0004842">
    <property type="term" value="F:ubiquitin-protein transferase activity"/>
    <property type="evidence" value="ECO:0000314"/>
    <property type="project" value="UniProtKB"/>
</dbReference>
<dbReference type="GO" id="GO:0006915">
    <property type="term" value="P:apoptotic process"/>
    <property type="evidence" value="ECO:0007669"/>
    <property type="project" value="UniProtKB-KW"/>
</dbReference>
<dbReference type="GO" id="GO:0051301">
    <property type="term" value="P:cell division"/>
    <property type="evidence" value="ECO:0007669"/>
    <property type="project" value="UniProtKB-KW"/>
</dbReference>
<dbReference type="GO" id="GO:0008283">
    <property type="term" value="P:cell population proliferation"/>
    <property type="evidence" value="ECO:0007669"/>
    <property type="project" value="Ensembl"/>
</dbReference>
<dbReference type="GO" id="GO:0060711">
    <property type="term" value="P:labyrinthine layer development"/>
    <property type="evidence" value="ECO:0007669"/>
    <property type="project" value="Ensembl"/>
</dbReference>
<dbReference type="GO" id="GO:0043066">
    <property type="term" value="P:negative regulation of apoptotic process"/>
    <property type="evidence" value="ECO:0000315"/>
    <property type="project" value="UniProtKB"/>
</dbReference>
<dbReference type="GO" id="GO:2001237">
    <property type="term" value="P:negative regulation of extrinsic apoptotic signaling pathway"/>
    <property type="evidence" value="ECO:0000315"/>
    <property type="project" value="UniProtKB"/>
</dbReference>
<dbReference type="GO" id="GO:0008284">
    <property type="term" value="P:positive regulation of cell population proliferation"/>
    <property type="evidence" value="ECO:0007669"/>
    <property type="project" value="Ensembl"/>
</dbReference>
<dbReference type="GO" id="GO:0006468">
    <property type="term" value="P:protein phosphorylation"/>
    <property type="evidence" value="ECO:0000304"/>
    <property type="project" value="UniProtKB"/>
</dbReference>
<dbReference type="GO" id="GO:0016567">
    <property type="term" value="P:protein ubiquitination"/>
    <property type="evidence" value="ECO:0000304"/>
    <property type="project" value="UniProtKB"/>
</dbReference>
<dbReference type="GO" id="GO:0042127">
    <property type="term" value="P:regulation of cell population proliferation"/>
    <property type="evidence" value="ECO:0000304"/>
    <property type="project" value="UniProtKB"/>
</dbReference>
<dbReference type="GO" id="GO:0032465">
    <property type="term" value="P:regulation of cytokinesis"/>
    <property type="evidence" value="ECO:0000315"/>
    <property type="project" value="UniProtKB"/>
</dbReference>
<dbReference type="CDD" id="cd00022">
    <property type="entry name" value="BIR"/>
    <property type="match status" value="1"/>
</dbReference>
<dbReference type="CDD" id="cd23810">
    <property type="entry name" value="UBCc_BIRC6"/>
    <property type="match status" value="1"/>
</dbReference>
<dbReference type="FunFam" id="3.10.110.10:FF:000014">
    <property type="entry name" value="Baculoviral IAP repeat-containing protein 6"/>
    <property type="match status" value="1"/>
</dbReference>
<dbReference type="FunFam" id="1.10.1170.10:FF:000001">
    <property type="entry name" value="baculoviral IAP repeat-containing protein 6 isoform X1"/>
    <property type="match status" value="1"/>
</dbReference>
<dbReference type="Gene3D" id="1.10.1170.10">
    <property type="entry name" value="Inhibitor Of Apoptosis Protein (2mihbC-IAP-1), Chain A"/>
    <property type="match status" value="1"/>
</dbReference>
<dbReference type="Gene3D" id="3.10.110.10">
    <property type="entry name" value="Ubiquitin Conjugating Enzyme"/>
    <property type="match status" value="1"/>
</dbReference>
<dbReference type="IDEAL" id="IID00636"/>
<dbReference type="InterPro" id="IPR001370">
    <property type="entry name" value="BIR_rpt"/>
</dbReference>
<dbReference type="InterPro" id="IPR022103">
    <property type="entry name" value="BIRC6"/>
</dbReference>
<dbReference type="InterPro" id="IPR000608">
    <property type="entry name" value="UBQ-conjugat_E2_core"/>
</dbReference>
<dbReference type="InterPro" id="IPR016135">
    <property type="entry name" value="UBQ-conjugating_enzyme/RWD"/>
</dbReference>
<dbReference type="PANTHER" id="PTHR46116">
    <property type="entry name" value="(E3-INDEPENDENT) E2 UBIQUITIN-CONJUGATING ENZYME"/>
    <property type="match status" value="1"/>
</dbReference>
<dbReference type="PANTHER" id="PTHR46116:SF39">
    <property type="entry name" value="BACULOVIRAL IAP REPEAT-CONTAINING PROTEIN 6"/>
    <property type="match status" value="1"/>
</dbReference>
<dbReference type="Pfam" id="PF00653">
    <property type="entry name" value="BIR"/>
    <property type="match status" value="1"/>
</dbReference>
<dbReference type="Pfam" id="PF12356">
    <property type="entry name" value="BIRC6"/>
    <property type="match status" value="1"/>
</dbReference>
<dbReference type="Pfam" id="PF00179">
    <property type="entry name" value="UQ_con"/>
    <property type="match status" value="1"/>
</dbReference>
<dbReference type="SMART" id="SM00238">
    <property type="entry name" value="BIR"/>
    <property type="match status" value="1"/>
</dbReference>
<dbReference type="SMART" id="SM00212">
    <property type="entry name" value="UBCc"/>
    <property type="match status" value="1"/>
</dbReference>
<dbReference type="SUPFAM" id="SSF57924">
    <property type="entry name" value="Inhibitor of apoptosis (IAP) repeat"/>
    <property type="match status" value="1"/>
</dbReference>
<dbReference type="SUPFAM" id="SSF54495">
    <property type="entry name" value="UBC-like"/>
    <property type="match status" value="1"/>
</dbReference>
<dbReference type="PROSITE" id="PS50143">
    <property type="entry name" value="BIR_REPEAT_2"/>
    <property type="match status" value="1"/>
</dbReference>
<dbReference type="PROSITE" id="PS50127">
    <property type="entry name" value="UBC_2"/>
    <property type="match status" value="1"/>
</dbReference>
<protein>
    <recommendedName>
        <fullName evidence="12 13 14">Dual E2 ubiquitin-conjugating enzyme/E3 ubiquitin-protein ligase BIRC6</fullName>
        <ecNumber evidence="7 8 9">2.3.2.24</ecNumber>
    </recommendedName>
    <alternativeName>
        <fullName evidence="11">BIR repeat-containing ubiquitin-conjugating enzyme</fullName>
        <shortName evidence="11">BRUCE</shortName>
    </alternativeName>
    <alternativeName>
        <fullName>Baculoviral IAP repeat-containing protein 6</fullName>
    </alternativeName>
    <alternativeName>
        <fullName evidence="10">Ubiquitin-conjugating BIR domain enzyme apollon</fullName>
        <shortName evidence="10">APOLLON</shortName>
    </alternativeName>
</protein>
<comment type="function">
    <text evidence="4 5 6 7 8 9">Anti-apoptotic protein known as inhibitor of apoptosis (IAP) which can regulate cell death by controlling caspases and by acting as an E3 ubiquitin-protein ligase (PubMed:14765125, PubMed:15200957, PubMed:18329369). Unlike most IAPs, does not contain a RING domain and it is not a RING-type E3 ligase (PubMed:15200957, PubMed:36758104, PubMed:36758105, PubMed:36758106). Instead acts as a dual E2/E3 enzyme that combines ubiquitin conjugating (E2) and ubiquitin ligase (E3) activities in a single polypeptide (PubMed:15200957, PubMed:36758104, PubMed:36758105, PubMed:36758106). Ubiquitination is mediated by a non-canonical E1 ubiquitin activating enzyme UBA6 (PubMed:36758104, PubMed:36758105, PubMed:36758106). Ubiquitinates CASP3, CASP7 and CASP9 and inhibits their caspase activity; also ubiquitinates their procaspases but to a weaker extent (PubMed:15200957, PubMed:36758104, PubMed:36758105, PubMed:36758106). Ubiquitinates pro-apoptotic factors DIABLO/SMAC and HTRA2 (PubMed:15200957, PubMed:36758104, PubMed:36758105, PubMed:36758106). DIABLO/SMAC antagonizes the caspase inhibition activity of BIRC6 by competing for the same binding sites as the caspases (PubMed:18329369, PubMed:36758106). Ubiquitinates the autophagy protein MAP1LC3B; this activity is also inhibited by DIABLO/SMAC (PubMed:36758105). Important regulator for the final stages of cytokinesis (PubMed:18329369). Crucial for normal vesicle targeting to the site of abscission, but also for the integrity of the midbody and the midbody ring, and its striking ubiquitin modification (PubMed:18329369).</text>
</comment>
<comment type="catalytic activity">
    <reaction evidence="7 8 9">
        <text>S-ubiquitinyl-[E1 ubiquitin-activating enzyme]-L-cysteine + [acceptor protein]-L-lysine = [E1 ubiquitin-activating enzyme]-L-cysteine + N(6)-monoubiquitinyl-[acceptor protein]-L-lysine.</text>
        <dbReference type="EC" id="2.3.2.24"/>
    </reaction>
</comment>
<comment type="activity regulation">
    <text evidence="5 7 8 9">Inhibited by DIABLO/SMAC, which competes for the substrate-binding sites on BIRC6 (PubMed:15200957, PubMed:36758104, PubMed:36758105, PubMed:36758106). BIRC6 inhibits caspases and protease by ubiquitination but BIRC6 itself is subjected to protease cleavage by CASP3, CASP6, CASP7, CASP9 and HTRA2 by protease cleavage (PubMed:15200957, PubMed:36758104, PubMed:36758105).</text>
</comment>
<comment type="subunit">
    <text evidence="4 5 6 7 8 9">Homodimer; antiparallel (PubMed:36758104, PubMed:36758105, PubMed:36758106). Interacts with RNF41 (PubMed:14765125). Interacts with DIABLO/SMAC, likely with higher affinity to SMAC dimer than SMAC monomer; this interaction blocks the substrate-binding site and inhibits the caspase inhibition activity of BIRC6 (PubMed:15200957, PubMed:36758104, PubMed:36758105, PubMed:36758106). Interacts with KIF23/MKLP1, USP8/UBPY, BIRC5/survivin, MAP2K1/MEK1, RAB8A/RAB8, RAB11A/RAB11, PLK1, EXOC3/SEC6 and EXOC4/SEC8 (PubMed:18329369).</text>
</comment>
<comment type="interaction">
    <interactant intactId="EBI-1765160">
        <id>Q9NR09</id>
    </interactant>
    <interactant intactId="EBI-1048311">
        <id>Q99996</id>
        <label>AKAP9</label>
    </interactant>
    <organismsDiffer>false</organismsDiffer>
    <experiments>2</experiments>
</comment>
<comment type="interaction">
    <interactant intactId="EBI-1765160">
        <id>Q9NR09</id>
    </interactant>
    <interactant intactId="EBI-53997188">
        <id>Q8ND61</id>
        <label>C3orf20</label>
    </interactant>
    <organismsDiffer>false</organismsDiffer>
    <experiments>2</experiments>
</comment>
<comment type="interaction">
    <interactant intactId="EBI-1765160">
        <id>Q9NR09</id>
    </interactant>
    <interactant intactId="EBI-355383">
        <id>Q96A65</id>
        <label>EXOC4</label>
    </interactant>
    <organismsDiffer>false</organismsDiffer>
    <experiments>3</experiments>
</comment>
<comment type="interaction">
    <interactant intactId="EBI-1765160">
        <id>Q9NR09</id>
    </interactant>
    <interactant intactId="EBI-306852">
        <id>Q02241</id>
        <label>KIF23</label>
    </interactant>
    <organismsDiffer>false</organismsDiffer>
    <experiments>4</experiments>
</comment>
<comment type="interaction">
    <interactant intactId="EBI-1765160">
        <id>Q9NR09</id>
    </interactant>
    <interactant intactId="EBI-492564">
        <id>Q02750</id>
        <label>MAP2K1</label>
    </interactant>
    <organismsDiffer>false</organismsDiffer>
    <experiments>2</experiments>
</comment>
<comment type="interaction">
    <interactant intactId="EBI-1765160">
        <id>Q9NR09</id>
    </interactant>
    <interactant intactId="EBI-2828285">
        <id>Q9H1P3</id>
        <label>OSBPL2</label>
    </interactant>
    <organismsDiffer>false</organismsDiffer>
    <experiments>2</experiments>
</comment>
<comment type="interaction">
    <interactant intactId="EBI-1765160">
        <id>Q9NR09</id>
    </interactant>
    <interactant intactId="EBI-476768">
        <id>P53350</id>
        <label>PLK1</label>
    </interactant>
    <organismsDiffer>false</organismsDiffer>
    <experiments>4</experiments>
</comment>
<comment type="interaction">
    <interactant intactId="EBI-1765160">
        <id>Q9NR09</id>
    </interactant>
    <interactant intactId="EBI-20841176">
        <id>Q86UB9</id>
        <label>TMEM135</label>
    </interactant>
    <organismsDiffer>false</organismsDiffer>
    <experiments>2</experiments>
</comment>
<comment type="subcellular location">
    <subcellularLocation>
        <location evidence="6">Golgi apparatus</location>
        <location evidence="6">trans-Golgi network membrane</location>
    </subcellularLocation>
    <subcellularLocation>
        <location evidence="6">Endosome</location>
    </subcellularLocation>
    <subcellularLocation>
        <location evidence="6">Cytoplasm</location>
        <location evidence="6">Cytoskeleton</location>
        <location evidence="6">Spindle pole</location>
    </subcellularLocation>
    <subcellularLocation>
        <location evidence="6">Cytoplasm</location>
        <location evidence="6">Cytoskeleton</location>
        <location evidence="6">Microtubule organizing center</location>
        <location evidence="6">Centrosome</location>
    </subcellularLocation>
    <subcellularLocation>
        <location evidence="6">Midbody</location>
        <location evidence="6">Midbody ring</location>
    </subcellularLocation>
    <text evidence="6">Exhibits cell cycle-dependent localization. Concentrates in a pericentriolar compartment in interphase, moves partially to spindle poles in metaphase, and finally localizes to the spindle midzone and the midbody in telophase and during cytokinesis. On the midbody, localizes to the midbody ring, also called Flemming body (PubMed:18329369). In interphase cells, localizes to the trans-Golgi network membrane and endosomes. During cytokinesis, a fraction moves to the midzone where it specifically arrives at the midbody ring. After abscission completion, travels with the midbody remnant into one daughter cell, and remains bound to it until a new midbody ring is formed during the next cell division (PubMed:18329369).</text>
</comment>
<comment type="tissue specificity">
    <text>Expressed in brain cancer cells.</text>
</comment>
<comment type="domain">
    <text evidence="5 7 8 9">The BIR domain is essential for its anti-apoptotic function and is important for binding to DIABLO/SMAC and caspases.</text>
</comment>
<comment type="PTM">
    <text evidence="4 6 7 8 9">Ubiquitinated; mediated by RNF41 E3 ligase and leads to proteasomal degradation, impairing inhibition of apoptosis (PubMed:14765125). Deubiquitinated by USP8/UBPY (PubMed:18329369). Autoubiquitinated; mediated by E1 ubiquitin activating enzyme UBA6 (PubMed:36758104, PubMed:36758105, PubMed:36758106).</text>
</comment>
<comment type="PTM">
    <text evidence="7 8">Proteolytically cleaved. Acts as substrate for CASP3, CASP6, CASP7, CASP9 and HTRA2.</text>
</comment>
<comment type="similarity">
    <text evidence="15">Belongs to the BIRC6 family.</text>
</comment>
<comment type="sequence caution" evidence="15">
    <conflict type="frameshift">
        <sequence resource="EMBL-CDS" id="BAA86603"/>
    </conflict>
</comment>
<comment type="online information" name="Atlas of Genetics and Cytogenetics in Oncology and Haematology">
    <link uri="https://atlasgeneticsoncology.org/gene/798/BIRC6"/>
</comment>
<accession>Q9NR09</accession>
<accession>Q9ULD1</accession>
<keyword id="KW-0002">3D-structure</keyword>
<keyword id="KW-0053">Apoptosis</keyword>
<keyword id="KW-0131">Cell cycle</keyword>
<keyword id="KW-0132">Cell division</keyword>
<keyword id="KW-0963">Cytoplasm</keyword>
<keyword id="KW-0206">Cytoskeleton</keyword>
<keyword id="KW-0967">Endosome</keyword>
<keyword id="KW-0333">Golgi apparatus</keyword>
<keyword id="KW-0472">Membrane</keyword>
<keyword id="KW-0479">Metal-binding</keyword>
<keyword id="KW-0498">Mitosis</keyword>
<keyword id="KW-0597">Phosphoprotein</keyword>
<keyword id="KW-0646">Protease inhibitor</keyword>
<keyword id="KW-1267">Proteomics identification</keyword>
<keyword id="KW-1185">Reference proteome</keyword>
<keyword id="KW-0677">Repeat</keyword>
<keyword id="KW-0789">Thiol protease inhibitor</keyword>
<keyword id="KW-0808">Transferase</keyword>
<keyword id="KW-0832">Ubl conjugation</keyword>
<keyword id="KW-0833">Ubl conjugation pathway</keyword>
<keyword id="KW-0853">WD repeat</keyword>
<keyword id="KW-0862">Zinc</keyword>
<feature type="chain" id="PRO_0000122361" description="Dual E2 ubiquitin-conjugating enzyme/E3 ubiquitin-protein ligase BIRC6">
    <location>
        <begin position="1"/>
        <end position="4857"/>
    </location>
</feature>
<feature type="repeat" description="WD 1" evidence="7 8 9 26 28">
    <location>
        <begin position="68"/>
        <end position="106"/>
    </location>
</feature>
<feature type="repeat" description="WD 2" evidence="7 8 9 26 28">
    <location>
        <begin position="107"/>
        <end position="136"/>
    </location>
</feature>
<feature type="repeat" description="BIR" evidence="7 8 9">
    <location>
        <begin position="268"/>
        <end position="377"/>
    </location>
</feature>
<feature type="repeat" description="WD 3" evidence="7 8 9 26 28">
    <location>
        <begin position="379"/>
        <end position="426"/>
    </location>
</feature>
<feature type="repeat" description="WD 4" evidence="7 8 9 26 28">
    <location>
        <begin position="501"/>
        <end position="720"/>
    </location>
</feature>
<feature type="repeat" description="WD 5" evidence="7 8 9 26 28">
    <location>
        <begin position="730"/>
        <end position="850"/>
    </location>
</feature>
<feature type="repeat" description="WD 6" evidence="7 8 9 26 28">
    <location>
        <begin position="851"/>
        <end position="927"/>
    </location>
</feature>
<feature type="repeat" description="WD 7" evidence="7 8 9 26 28">
    <location>
        <begin position="928"/>
        <end position="966"/>
    </location>
</feature>
<feature type="domain" description="Ubiquitin-like" evidence="7 8 9 17 19 23">
    <location>
        <begin position="3819"/>
        <end position="4068"/>
    </location>
</feature>
<feature type="domain" description="UBC core" evidence="2">
    <location>
        <begin position="4573"/>
        <end position="4740"/>
    </location>
</feature>
<feature type="region of interest" description="Disordered" evidence="3">
    <location>
        <begin position="465"/>
        <end position="498"/>
    </location>
</feature>
<feature type="region of interest" description="Disordered" evidence="3">
    <location>
        <begin position="579"/>
        <end position="618"/>
    </location>
</feature>
<feature type="region of interest" description="Disordered" evidence="3">
    <location>
        <begin position="984"/>
        <end position="1004"/>
    </location>
</feature>
<feature type="region of interest" description="Disordered" evidence="3">
    <location>
        <begin position="1053"/>
        <end position="1073"/>
    </location>
</feature>
<feature type="region of interest" description="Disordered" evidence="3">
    <location>
        <begin position="2945"/>
        <end position="2973"/>
    </location>
</feature>
<feature type="region of interest" description="HRRAR loop; important for DIABLO/SMAC and HTRA2 binding" evidence="8 9 18 21 22">
    <location>
        <begin position="3189"/>
        <end position="3193"/>
    </location>
</feature>
<feature type="region of interest" description="Disordered" evidence="3">
    <location>
        <begin position="3923"/>
        <end position="3949"/>
    </location>
</feature>
<feature type="region of interest" description="Disordered" evidence="3">
    <location>
        <begin position="4260"/>
        <end position="4283"/>
    </location>
</feature>
<feature type="region of interest" description="Disordered" evidence="3">
    <location>
        <begin position="4835"/>
        <end position="4857"/>
    </location>
</feature>
<feature type="compositionally biased region" description="Acidic residues" evidence="3">
    <location>
        <begin position="472"/>
        <end position="482"/>
    </location>
</feature>
<feature type="compositionally biased region" description="Polar residues" evidence="3">
    <location>
        <begin position="579"/>
        <end position="588"/>
    </location>
</feature>
<feature type="compositionally biased region" description="Polar residues" evidence="3">
    <location>
        <begin position="595"/>
        <end position="618"/>
    </location>
</feature>
<feature type="compositionally biased region" description="Polar residues" evidence="3">
    <location>
        <begin position="992"/>
        <end position="1004"/>
    </location>
</feature>
<feature type="compositionally biased region" description="Basic residues" evidence="3">
    <location>
        <begin position="1056"/>
        <end position="1065"/>
    </location>
</feature>
<feature type="compositionally biased region" description="Polar residues" evidence="3">
    <location>
        <begin position="4261"/>
        <end position="4283"/>
    </location>
</feature>
<feature type="compositionally biased region" description="Polar residues" evidence="3">
    <location>
        <begin position="4844"/>
        <end position="4857"/>
    </location>
</feature>
<feature type="active site" description="Glycyl thioester intermediate" evidence="2">
    <location>
        <position position="4666"/>
    </location>
</feature>
<feature type="binding site" evidence="8 19 20 21 22">
    <location>
        <position position="328"/>
    </location>
    <ligand>
        <name>Zn(2+)</name>
        <dbReference type="ChEBI" id="CHEBI:29105"/>
    </ligand>
</feature>
<feature type="binding site" evidence="8 19 20 21 22">
    <location>
        <position position="331"/>
    </location>
    <ligand>
        <name>Zn(2+)</name>
        <dbReference type="ChEBI" id="CHEBI:29105"/>
    </ligand>
</feature>
<feature type="binding site" evidence="8 19 20 21 22">
    <location>
        <position position="348"/>
    </location>
    <ligand>
        <name>Zn(2+)</name>
        <dbReference type="ChEBI" id="CHEBI:29105"/>
    </ligand>
</feature>
<feature type="binding site" evidence="8 19 20 21 22">
    <location>
        <position position="355"/>
    </location>
    <ligand>
        <name>Zn(2+)</name>
        <dbReference type="ChEBI" id="CHEBI:29105"/>
    </ligand>
</feature>
<feature type="modified residue" description="Phosphoserine" evidence="1">
    <location>
        <position position="473"/>
    </location>
</feature>
<feature type="modified residue" description="Phosphoserine" evidence="30 31 32 33 34">
    <location>
        <position position="480"/>
    </location>
</feature>
<feature type="modified residue" description="Phosphoserine" evidence="1">
    <location>
        <position position="482"/>
    </location>
</feature>
<feature type="modified residue" description="Phosphoserine" evidence="33">
    <location>
        <position position="581"/>
    </location>
</feature>
<feature type="modified residue" description="Phosphoserine" evidence="33">
    <location>
        <position position="590"/>
    </location>
</feature>
<feature type="modified residue" description="Phosphothreonine" evidence="34">
    <location>
        <position position="1710"/>
    </location>
</feature>
<feature type="modified residue" description="Phosphoserine" evidence="33">
    <location>
        <position position="2222"/>
    </location>
</feature>
<feature type="modified residue" description="Phosphoserine" evidence="33">
    <location>
        <position position="2955"/>
    </location>
</feature>
<feature type="modified residue" description="Phosphothreonine" evidence="33">
    <location>
        <position position="3931"/>
    </location>
</feature>
<feature type="modified residue" description="Phosphoserine" evidence="33">
    <location>
        <position position="4023"/>
    </location>
</feature>
<feature type="mutagenesis site" description="Impairs ubiquitination of CASP3, CASP7 and HTRA2 mutant 'A-306'; when associated with S-331. Abolishes interaction with DIABLO/SMAC and impairs ubiquitination of DIABLO/SMAC; when associated with S-331 and 1616-A--A-1666 del." evidence="7">
    <original>C</original>
    <variation>S</variation>
    <location>
        <position position="328"/>
    </location>
</feature>
<feature type="mutagenesis site" description="Impairs ubiquitination of CASP3, CASP7 and HTRA2 mutant 'A-306'; when associated with S-328. Abolishes interaction with DIABLO/SMAC and impairs ubiquitination of DIABLO/SMAC; when associated with S-328 and 1616-A--A-1666 del." evidence="7">
    <original>C</original>
    <variation>S</variation>
    <location>
        <position position="331"/>
    </location>
</feature>
<feature type="mutagenesis site" description="Abolishes interaction with CASP3 and the caspase inhibition activity on CASP3. Impairs interaction with CASP7 and abolishes the caspase inhibition activity on CASP7. Abolishes interaction with CASP9. Abolishes interaction with monomeric DIABLO/SMAC 'D-81' mutant. Abolishes interaction with N-degron peptide from DIABLO/SMAC." evidence="8 9">
    <original>D</original>
    <variation>A</variation>
    <location>
        <position position="342"/>
    </location>
</feature>
<feature type="mutagenesis site" description="Fails to ubiquitinate N-degron peptide from HTRA2. Impairs DIABLO/SMAC inhibition on the ubiquitination of MAP1LC3B by BIRC6. Enhances ubiquitination of DIABLO/SMAC. Impairs interaction with DIABLO/SMAC; when associated with H-351. Severely impairs DIABLO/SMAC inhibition on the ubiquitination of MAP1LC3B by BIRC6; when associated with 2228-S--T-2295 del and 3190-A--A-3193. Enhances ubiquitination of DIABLO/SMAC; when associated with 2228-S--T-2295 del and 3190-A--A-3193." evidence="8">
    <original>D</original>
    <variation>Q</variation>
    <location>
        <position position="342"/>
    </location>
</feature>
<feature type="mutagenesis site" description="Impairs interaction with CASP3 and abolishes the caspase inhibition activity on CASP3. Impairs interaction with CASP7 but has little effect on the caspase inhibition activity on CASP7. Impairs interaction with CASP9. Impairs interaction with monomeric DIABLO/SMAC 'D-81' mutant. Impairs interaction with N-degron peptide from DIABLO/SMAC. Impairs interaction with DIABLO/SMAC; when associated with A-342." evidence="8 9">
    <original>H</original>
    <variation>D</variation>
    <location>
        <position position="351"/>
    </location>
</feature>
<feature type="mutagenesis site" description="Slightly impairs interaction with DIABLO/SMAC. Abolishes interaction with DIABLO/SMAC and impairs ubiquitination of DIABLO/SMAC; when associated with S-328 and S-331." evidence="7">
    <location>
        <begin position="1616"/>
        <end position="1666"/>
    </location>
</feature>
<feature type="mutagenesis site" description="Impairs DIABLO/SMAC inhibition on the ubiquitination of MAP1LC3B by BIRC6. Enhances ubiquitination of DIABLO/SMAC. Severely impairs DIABLO/SMAC inhibition on the ubiquitination of MAP1LC3B by BIRC6; when associated with Q-342 and 3190-A--A-3193. Enhances ubiquitination of DIABLO/SMAC; when associated with Q-342 and 3190-A--A-3193." evidence="8">
    <location>
        <begin position="2228"/>
        <end position="2295"/>
    </location>
</feature>
<feature type="mutagenesis site" description="Impairs interaction with monomeric DIABLO/SMAC 'D-81' mutant." evidence="9">
    <original>HRRAR</original>
    <variation>AAAAA</variation>
    <location>
        <begin position="3189"/>
        <end position="3193"/>
    </location>
</feature>
<feature type="mutagenesis site" description="Impairs interaction with CASP7 and mildly impairs the caspase inhibition activity on CASP7. Impairs interaction with monomeric DIABLO/SMAC 'D-81' mutant. Impairs interaction with DIABLO/SMAC; when associated with A-342. Abolishes interaction with monomeric DIABLO/SMAC 'D-81' mutant; when associated with A-342." evidence="9">
    <original>HRRAR</original>
    <variation>DDDDD</variation>
    <location>
        <begin position="3189"/>
        <end position="3193"/>
    </location>
</feature>
<feature type="mutagenesis site" description="No effect on DIABLO/SMAC inhibition on the ubiquitination of MAP1LC3B by BIRC6. No effect on ubiquitination of DIABLO/SMAC. Severely impairs DIABLO/SMAC inhibition on the ubiquitination of MAP1LC3B by BIRC6; when associated with Q-342 and 2228-S--T-2295 del. Enhances ubiquitination of DIABLO/SMAC; when associated with Q-342 and 2228-S--T-2295 del." evidence="8">
    <original>RRAR</original>
    <variation>AAAA</variation>
    <location>
        <begin position="3190"/>
        <end position="3193"/>
    </location>
</feature>
<feature type="mutagenesis site" description="Impairs MAP1LC3B ubiquitination without disrupting HTRA2 ubiquitination." evidence="8">
    <location>
        <begin position="4094"/>
        <end position="4145"/>
    </location>
</feature>
<feature type="mutagenesis site" description="Catalytically inactive; fails to autoubiquitinate in the presence of UBA6." evidence="8">
    <original>C</original>
    <variation>A</variation>
    <location>
        <position position="4666"/>
    </location>
</feature>
<feature type="sequence conflict" description="In Ref. 3; BAA86603." evidence="15" ref="3">
    <original>L</original>
    <variation>F</variation>
    <location>
        <position position="2319"/>
    </location>
</feature>
<feature type="sequence conflict" description="In Ref. 2; AAF75772." evidence="15" ref="2">
    <original>T</original>
    <variation>S</variation>
    <location>
        <position position="2674"/>
    </location>
</feature>
<feature type="strand" evidence="37">
    <location>
        <begin position="74"/>
        <end position="76"/>
    </location>
</feature>
<feature type="turn" evidence="37">
    <location>
        <begin position="77"/>
        <end position="80"/>
    </location>
</feature>
<feature type="strand" evidence="37">
    <location>
        <begin position="81"/>
        <end position="85"/>
    </location>
</feature>
<feature type="strand" evidence="37">
    <location>
        <begin position="91"/>
        <end position="95"/>
    </location>
</feature>
<feature type="turn" evidence="37">
    <location>
        <begin position="96"/>
        <end position="98"/>
    </location>
</feature>
<feature type="strand" evidence="37">
    <location>
        <begin position="101"/>
        <end position="105"/>
    </location>
</feature>
<feature type="turn" evidence="37">
    <location>
        <begin position="121"/>
        <end position="124"/>
    </location>
</feature>
<feature type="strand" evidence="37">
    <location>
        <begin position="125"/>
        <end position="129"/>
    </location>
</feature>
<feature type="strand" evidence="37">
    <location>
        <begin position="134"/>
        <end position="137"/>
    </location>
</feature>
<feature type="turn" evidence="37">
    <location>
        <begin position="147"/>
        <end position="150"/>
    </location>
</feature>
<feature type="strand" evidence="37">
    <location>
        <begin position="159"/>
        <end position="166"/>
    </location>
</feature>
<feature type="helix" evidence="37">
    <location>
        <begin position="167"/>
        <end position="178"/>
    </location>
</feature>
<feature type="helix" evidence="37">
    <location>
        <begin position="189"/>
        <end position="203"/>
    </location>
</feature>
<feature type="helix" evidence="37">
    <location>
        <begin position="213"/>
        <end position="216"/>
    </location>
</feature>
<feature type="strand" evidence="37">
    <location>
        <begin position="218"/>
        <end position="224"/>
    </location>
</feature>
<feature type="helix" evidence="37">
    <location>
        <begin position="225"/>
        <end position="242"/>
    </location>
</feature>
<feature type="helix" evidence="37">
    <location>
        <begin position="248"/>
        <end position="262"/>
    </location>
</feature>
<feature type="helix" evidence="37">
    <location>
        <begin position="280"/>
        <end position="282"/>
    </location>
</feature>
<feature type="helix" evidence="37">
    <location>
        <begin position="286"/>
        <end position="292"/>
    </location>
</feature>
<feature type="helix" evidence="37">
    <location>
        <begin position="293"/>
        <end position="295"/>
    </location>
</feature>
<feature type="helix" evidence="37">
    <location>
        <begin position="306"/>
        <end position="311"/>
    </location>
</feature>
<feature type="strand" evidence="37">
    <location>
        <begin position="314"/>
        <end position="316"/>
    </location>
</feature>
<feature type="strand" evidence="37">
    <location>
        <begin position="326"/>
        <end position="328"/>
    </location>
</feature>
<feature type="turn" evidence="37">
    <location>
        <begin position="329"/>
        <end position="331"/>
    </location>
</feature>
<feature type="helix" evidence="37">
    <location>
        <begin position="344"/>
        <end position="351"/>
    </location>
</feature>
<feature type="turn" evidence="37">
    <location>
        <begin position="356"/>
        <end position="360"/>
    </location>
</feature>
<feature type="helix" evidence="37">
    <location>
        <begin position="368"/>
        <end position="372"/>
    </location>
</feature>
<feature type="strand" evidence="37">
    <location>
        <begin position="380"/>
        <end position="383"/>
    </location>
</feature>
<feature type="strand" evidence="37">
    <location>
        <begin position="388"/>
        <end position="390"/>
    </location>
</feature>
<feature type="strand" evidence="37">
    <location>
        <begin position="400"/>
        <end position="404"/>
    </location>
</feature>
<feature type="strand" evidence="37">
    <location>
        <begin position="407"/>
        <end position="413"/>
    </location>
</feature>
<feature type="turn" evidence="37">
    <location>
        <begin position="414"/>
        <end position="417"/>
    </location>
</feature>
<feature type="strand" evidence="37">
    <location>
        <begin position="419"/>
        <end position="425"/>
    </location>
</feature>
<feature type="helix" evidence="37">
    <location>
        <begin position="431"/>
        <end position="436"/>
    </location>
</feature>
<feature type="strand" evidence="37">
    <location>
        <begin position="504"/>
        <end position="513"/>
    </location>
</feature>
<feature type="strand" evidence="37">
    <location>
        <begin position="566"/>
        <end position="574"/>
    </location>
</feature>
<feature type="strand" evidence="37">
    <location>
        <begin position="626"/>
        <end position="634"/>
    </location>
</feature>
<feature type="strand" evidence="37">
    <location>
        <begin position="716"/>
        <end position="721"/>
    </location>
</feature>
<feature type="helix" evidence="37">
    <location>
        <begin position="725"/>
        <end position="728"/>
    </location>
</feature>
<feature type="strand" evidence="37">
    <location>
        <begin position="731"/>
        <end position="738"/>
    </location>
</feature>
<feature type="strand" evidence="37">
    <location>
        <begin position="740"/>
        <end position="751"/>
    </location>
</feature>
<feature type="strand" evidence="37">
    <location>
        <begin position="823"/>
        <end position="829"/>
    </location>
</feature>
<feature type="strand" evidence="37">
    <location>
        <begin position="844"/>
        <end position="849"/>
    </location>
</feature>
<feature type="strand" evidence="37">
    <location>
        <begin position="912"/>
        <end position="916"/>
    </location>
</feature>
<feature type="turn" evidence="37">
    <location>
        <begin position="917"/>
        <end position="920"/>
    </location>
</feature>
<feature type="strand" evidence="37">
    <location>
        <begin position="921"/>
        <end position="925"/>
    </location>
</feature>
<feature type="strand" evidence="37">
    <location>
        <begin position="940"/>
        <end position="945"/>
    </location>
</feature>
<feature type="turn" evidence="37">
    <location>
        <begin position="947"/>
        <end position="949"/>
    </location>
</feature>
<feature type="strand" evidence="37">
    <location>
        <begin position="951"/>
        <end position="956"/>
    </location>
</feature>
<feature type="strand" evidence="37">
    <location>
        <begin position="961"/>
        <end position="965"/>
    </location>
</feature>
<feature type="turn" evidence="36">
    <location>
        <begin position="1012"/>
        <end position="1014"/>
    </location>
</feature>
<feature type="helix" evidence="36">
    <location>
        <begin position="1019"/>
        <end position="1027"/>
    </location>
</feature>
<feature type="strand" evidence="36">
    <location>
        <begin position="1031"/>
        <end position="1033"/>
    </location>
</feature>
<feature type="strand" evidence="36">
    <location>
        <begin position="1039"/>
        <end position="1041"/>
    </location>
</feature>
<feature type="strand" evidence="36">
    <location>
        <begin position="1046"/>
        <end position="1048"/>
    </location>
</feature>
<feature type="helix" evidence="36">
    <location>
        <begin position="1051"/>
        <end position="1054"/>
    </location>
</feature>
<feature type="strand" evidence="36">
    <location>
        <begin position="1056"/>
        <end position="1058"/>
    </location>
</feature>
<feature type="helix" evidence="36">
    <location>
        <begin position="1061"/>
        <end position="1066"/>
    </location>
</feature>
<feature type="helix" evidence="36">
    <location>
        <begin position="1070"/>
        <end position="1072"/>
    </location>
</feature>
<feature type="strand" evidence="36">
    <location>
        <begin position="1074"/>
        <end position="1079"/>
    </location>
</feature>
<feature type="turn" evidence="36">
    <location>
        <begin position="1083"/>
        <end position="1086"/>
    </location>
</feature>
<feature type="strand" evidence="36">
    <location>
        <begin position="1089"/>
        <end position="1094"/>
    </location>
</feature>
<feature type="strand" evidence="36">
    <location>
        <begin position="1101"/>
        <end position="1110"/>
    </location>
</feature>
<feature type="strand" evidence="36">
    <location>
        <begin position="1120"/>
        <end position="1126"/>
    </location>
</feature>
<feature type="helix" evidence="36">
    <location>
        <begin position="1172"/>
        <end position="1176"/>
    </location>
</feature>
<feature type="helix" evidence="36">
    <location>
        <begin position="1178"/>
        <end position="1180"/>
    </location>
</feature>
<feature type="strand" evidence="36">
    <location>
        <begin position="1181"/>
        <end position="1187"/>
    </location>
</feature>
<feature type="helix" evidence="36">
    <location>
        <begin position="1188"/>
        <end position="1191"/>
    </location>
</feature>
<feature type="strand" evidence="36">
    <location>
        <begin position="1199"/>
        <end position="1203"/>
    </location>
</feature>
<feature type="helix" evidence="36">
    <location>
        <begin position="1206"/>
        <end position="1209"/>
    </location>
</feature>
<feature type="strand" evidence="36">
    <location>
        <begin position="1219"/>
        <end position="1226"/>
    </location>
</feature>
<feature type="helix" evidence="36">
    <location>
        <begin position="1292"/>
        <end position="1295"/>
    </location>
</feature>
<feature type="strand" evidence="36">
    <location>
        <begin position="1296"/>
        <end position="1306"/>
    </location>
</feature>
<feature type="helix" evidence="36">
    <location>
        <begin position="1314"/>
        <end position="1323"/>
    </location>
</feature>
<feature type="helix" evidence="36">
    <location>
        <begin position="1325"/>
        <end position="1335"/>
    </location>
</feature>
<feature type="helix" evidence="36">
    <location>
        <begin position="1340"/>
        <end position="1342"/>
    </location>
</feature>
<feature type="helix" evidence="36">
    <location>
        <begin position="1346"/>
        <end position="1363"/>
    </location>
</feature>
<feature type="helix" evidence="36">
    <location>
        <begin position="1377"/>
        <end position="1383"/>
    </location>
</feature>
<feature type="helix" evidence="36">
    <location>
        <begin position="1385"/>
        <end position="1394"/>
    </location>
</feature>
<feature type="helix" evidence="36">
    <location>
        <begin position="1398"/>
        <end position="1413"/>
    </location>
</feature>
<feature type="helix" evidence="36">
    <location>
        <begin position="1424"/>
        <end position="1435"/>
    </location>
</feature>
<feature type="helix" evidence="36">
    <location>
        <begin position="1436"/>
        <end position="1441"/>
    </location>
</feature>
<feature type="helix" evidence="36">
    <location>
        <begin position="1445"/>
        <end position="1458"/>
    </location>
</feature>
<feature type="turn" evidence="36">
    <location>
        <begin position="1459"/>
        <end position="1462"/>
    </location>
</feature>
<feature type="helix" evidence="36">
    <location>
        <begin position="1463"/>
        <end position="1483"/>
    </location>
</feature>
<feature type="helix" evidence="36">
    <location>
        <begin position="1487"/>
        <end position="1495"/>
    </location>
</feature>
<feature type="strand" evidence="36">
    <location>
        <begin position="1562"/>
        <end position="1565"/>
    </location>
</feature>
<feature type="strand" evidence="36">
    <location>
        <begin position="1569"/>
        <end position="1574"/>
    </location>
</feature>
<feature type="strand" evidence="36">
    <location>
        <begin position="1578"/>
        <end position="1580"/>
    </location>
</feature>
<feature type="strand" evidence="36">
    <location>
        <begin position="1777"/>
        <end position="1781"/>
    </location>
</feature>
<feature type="turn" evidence="36">
    <location>
        <begin position="1784"/>
        <end position="1786"/>
    </location>
</feature>
<feature type="strand" evidence="36">
    <location>
        <begin position="1788"/>
        <end position="1806"/>
    </location>
</feature>
<feature type="strand" evidence="36">
    <location>
        <begin position="1812"/>
        <end position="1822"/>
    </location>
</feature>
<feature type="helix" evidence="36">
    <location>
        <begin position="1824"/>
        <end position="1827"/>
    </location>
</feature>
<feature type="strand" evidence="36">
    <location>
        <begin position="1829"/>
        <end position="1835"/>
    </location>
</feature>
<feature type="turn" evidence="36">
    <location>
        <begin position="1837"/>
        <end position="1839"/>
    </location>
</feature>
<feature type="strand" evidence="36">
    <location>
        <begin position="1842"/>
        <end position="1844"/>
    </location>
</feature>
<feature type="strand" evidence="36">
    <location>
        <begin position="1852"/>
        <end position="1862"/>
    </location>
</feature>
<feature type="strand" evidence="36">
    <location>
        <begin position="1871"/>
        <end position="1874"/>
    </location>
</feature>
<feature type="strand" evidence="36">
    <location>
        <begin position="1877"/>
        <end position="1883"/>
    </location>
</feature>
<feature type="turn" evidence="36">
    <location>
        <begin position="1886"/>
        <end position="1888"/>
    </location>
</feature>
<feature type="helix" evidence="36">
    <location>
        <begin position="2012"/>
        <end position="2017"/>
    </location>
</feature>
<feature type="helix" evidence="36">
    <location>
        <begin position="2020"/>
        <end position="2040"/>
    </location>
</feature>
<feature type="turn" evidence="36">
    <location>
        <begin position="2046"/>
        <end position="2048"/>
    </location>
</feature>
<feature type="strand" evidence="36">
    <location>
        <begin position="2049"/>
        <end position="2055"/>
    </location>
</feature>
<feature type="helix" evidence="36">
    <location>
        <begin position="2056"/>
        <end position="2066"/>
    </location>
</feature>
<feature type="turn" evidence="36">
    <location>
        <begin position="2067"/>
        <end position="2069"/>
    </location>
</feature>
<feature type="helix" evidence="36">
    <location>
        <begin position="2072"/>
        <end position="2086"/>
    </location>
</feature>
<feature type="helix" evidence="36">
    <location>
        <begin position="2092"/>
        <end position="2104"/>
    </location>
</feature>
<feature type="helix" evidence="36">
    <location>
        <begin position="2114"/>
        <end position="2127"/>
    </location>
</feature>
<feature type="turn" evidence="36">
    <location>
        <begin position="2128"/>
        <end position="2130"/>
    </location>
</feature>
<feature type="helix" evidence="36">
    <location>
        <begin position="2133"/>
        <end position="2146"/>
    </location>
</feature>
<feature type="helix" evidence="36">
    <location>
        <begin position="2147"/>
        <end position="2149"/>
    </location>
</feature>
<feature type="helix" evidence="36">
    <location>
        <begin position="2165"/>
        <end position="2181"/>
    </location>
</feature>
<feature type="helix" evidence="36">
    <location>
        <begin position="2326"/>
        <end position="2340"/>
    </location>
</feature>
<feature type="helix" evidence="36">
    <location>
        <begin position="2348"/>
        <end position="2364"/>
    </location>
</feature>
<feature type="helix" evidence="36">
    <location>
        <begin position="2569"/>
        <end position="2573"/>
    </location>
</feature>
<feature type="helix" evidence="36">
    <location>
        <begin position="2577"/>
        <end position="2598"/>
    </location>
</feature>
<feature type="helix" evidence="38">
    <location>
        <begin position="3429"/>
        <end position="3440"/>
    </location>
</feature>
<feature type="helix" evidence="38">
    <location>
        <begin position="3446"/>
        <end position="3468"/>
    </location>
</feature>
<feature type="helix" evidence="38">
    <location>
        <begin position="3484"/>
        <end position="3487"/>
    </location>
</feature>
<feature type="helix" evidence="38">
    <location>
        <begin position="3491"/>
        <end position="3506"/>
    </location>
</feature>
<feature type="helix" evidence="38">
    <location>
        <begin position="3513"/>
        <end position="3516"/>
    </location>
</feature>
<feature type="helix" evidence="38">
    <location>
        <begin position="3519"/>
        <end position="3531"/>
    </location>
</feature>
<feature type="helix" evidence="38">
    <location>
        <begin position="3537"/>
        <end position="3552"/>
    </location>
</feature>
<feature type="helix" evidence="38">
    <location>
        <begin position="3554"/>
        <end position="3564"/>
    </location>
</feature>
<feature type="helix" evidence="38">
    <location>
        <begin position="3607"/>
        <end position="3616"/>
    </location>
</feature>
<feature type="helix" evidence="38">
    <location>
        <begin position="3620"/>
        <end position="3628"/>
    </location>
</feature>
<feature type="helix" evidence="38">
    <location>
        <begin position="3631"/>
        <end position="3643"/>
    </location>
</feature>
<feature type="helix" evidence="38">
    <location>
        <begin position="3680"/>
        <end position="3694"/>
    </location>
</feature>
<feature type="helix" evidence="38">
    <location>
        <begin position="3697"/>
        <end position="3703"/>
    </location>
</feature>
<feature type="turn" evidence="38">
    <location>
        <begin position="3706"/>
        <end position="3708"/>
    </location>
</feature>
<feature type="helix" evidence="38">
    <location>
        <begin position="3709"/>
        <end position="3719"/>
    </location>
</feature>
<feature type="helix" evidence="38">
    <location>
        <begin position="3753"/>
        <end position="3771"/>
    </location>
</feature>
<feature type="helix" evidence="38">
    <location>
        <begin position="3775"/>
        <end position="3789"/>
    </location>
</feature>
<feature type="helix" evidence="38">
    <location>
        <begin position="3807"/>
        <end position="3815"/>
    </location>
</feature>
<feature type="strand" evidence="38">
    <location>
        <begin position="3821"/>
        <end position="3827"/>
    </location>
</feature>
<feature type="helix" evidence="38">
    <location>
        <begin position="3847"/>
        <end position="3849"/>
    </location>
</feature>
<feature type="strand" evidence="38">
    <location>
        <begin position="3855"/>
        <end position="3861"/>
    </location>
</feature>
<feature type="helix" evidence="38">
    <location>
        <begin position="3866"/>
        <end position="3873"/>
    </location>
</feature>
<feature type="strand" evidence="38">
    <location>
        <begin position="3966"/>
        <end position="3968"/>
    </location>
</feature>
<feature type="turn" evidence="38">
    <location>
        <begin position="3971"/>
        <end position="3974"/>
    </location>
</feature>
<feature type="helix" evidence="38">
    <location>
        <begin position="3983"/>
        <end position="3992"/>
    </location>
</feature>
<feature type="strand" evidence="38">
    <location>
        <begin position="4000"/>
        <end position="4007"/>
    </location>
</feature>
<feature type="helix" evidence="38">
    <location>
        <begin position="4070"/>
        <end position="4076"/>
    </location>
</feature>
<feature type="helix" evidence="38">
    <location>
        <begin position="4079"/>
        <end position="4084"/>
    </location>
</feature>
<feature type="helix" evidence="38">
    <location>
        <begin position="4155"/>
        <end position="4164"/>
    </location>
</feature>
<feature type="helix" evidence="38">
    <location>
        <begin position="4170"/>
        <end position="4174"/>
    </location>
</feature>
<feature type="helix" evidence="38">
    <location>
        <begin position="4178"/>
        <end position="4188"/>
    </location>
</feature>
<feature type="strand" evidence="38">
    <location>
        <begin position="4195"/>
        <end position="4197"/>
    </location>
</feature>
<feature type="helix" evidence="38">
    <location>
        <begin position="4209"/>
        <end position="4211"/>
    </location>
</feature>
<feature type="helix" evidence="38">
    <location>
        <begin position="4212"/>
        <end position="4222"/>
    </location>
</feature>
<feature type="strand" evidence="38">
    <location>
        <begin position="4226"/>
        <end position="4228"/>
    </location>
</feature>
<feature type="helix" evidence="38">
    <location>
        <begin position="4229"/>
        <end position="4241"/>
    </location>
</feature>
<feature type="helix" evidence="38">
    <location>
        <begin position="4243"/>
        <end position="4255"/>
    </location>
</feature>
<feature type="helix" evidence="38">
    <location>
        <begin position="4306"/>
        <end position="4331"/>
    </location>
</feature>
<feature type="helix" evidence="38">
    <location>
        <begin position="4360"/>
        <end position="4366"/>
    </location>
</feature>
<feature type="helix" evidence="38">
    <location>
        <begin position="4369"/>
        <end position="4377"/>
    </location>
</feature>
<feature type="helix" evidence="38">
    <location>
        <begin position="4382"/>
        <end position="4385"/>
    </location>
</feature>
<feature type="helix" evidence="38">
    <location>
        <begin position="4389"/>
        <end position="4403"/>
    </location>
</feature>
<feature type="turn" evidence="38">
    <location>
        <begin position="4406"/>
        <end position="4408"/>
    </location>
</feature>
<feature type="helix" evidence="38">
    <location>
        <begin position="4409"/>
        <end position="4411"/>
    </location>
</feature>
<feature type="helix" evidence="38">
    <location>
        <begin position="4433"/>
        <end position="4454"/>
    </location>
</feature>
<feature type="helix" evidence="38">
    <location>
        <begin position="4474"/>
        <end position="4498"/>
    </location>
</feature>
<feature type="helix" evidence="35">
    <location>
        <begin position="4524"/>
        <end position="4533"/>
    </location>
</feature>
<feature type="strand" evidence="35">
    <location>
        <begin position="4536"/>
        <end position="4540"/>
    </location>
</feature>
<feature type="strand" evidence="35">
    <location>
        <begin position="4543"/>
        <end position="4545"/>
    </location>
</feature>
<feature type="strand" evidence="35">
    <location>
        <begin position="4551"/>
        <end position="4555"/>
    </location>
</feature>
<feature type="helix" evidence="35">
    <location>
        <begin position="4560"/>
        <end position="4564"/>
    </location>
</feature>
<feature type="helix" evidence="35">
    <location>
        <begin position="4572"/>
        <end position="4588"/>
    </location>
</feature>
<feature type="strand" evidence="35">
    <location>
        <begin position="4597"/>
        <end position="4604"/>
    </location>
</feature>
<feature type="strand" evidence="35">
    <location>
        <begin position="4608"/>
        <end position="4615"/>
    </location>
</feature>
<feature type="strand" evidence="35">
    <location>
        <begin position="4625"/>
        <end position="4631"/>
    </location>
</feature>
<feature type="turn" evidence="35">
    <location>
        <begin position="4634"/>
        <end position="4638"/>
    </location>
</feature>
<feature type="strand" evidence="35">
    <location>
        <begin position="4642"/>
        <end position="4645"/>
    </location>
</feature>
<feature type="turn" evidence="35">
    <location>
        <begin position="4649"/>
        <end position="4652"/>
    </location>
</feature>
<feature type="helix" evidence="35">
    <location>
        <begin position="4668"/>
        <end position="4670"/>
    </location>
</feature>
<feature type="helix" evidence="35">
    <location>
        <begin position="4677"/>
        <end position="4679"/>
    </location>
</feature>
<feature type="turn" evidence="35">
    <location>
        <begin position="4683"/>
        <end position="4685"/>
    </location>
</feature>
<feature type="helix" evidence="35">
    <location>
        <begin position="4688"/>
        <end position="4698"/>
    </location>
</feature>
<feature type="helix" evidence="35">
    <location>
        <begin position="4704"/>
        <end position="4707"/>
    </location>
</feature>
<feature type="helix" evidence="35">
    <location>
        <begin position="4711"/>
        <end position="4714"/>
    </location>
</feature>
<feature type="helix" evidence="35">
    <location>
        <begin position="4718"/>
        <end position="4738"/>
    </location>
</feature>
<feature type="helix" evidence="35">
    <location>
        <begin position="4741"/>
        <end position="4745"/>
    </location>
</feature>
<feature type="turn" evidence="35">
    <location>
        <begin position="4749"/>
        <end position="4751"/>
    </location>
</feature>
<feature type="helix" evidence="35">
    <location>
        <begin position="4752"/>
        <end position="4777"/>
    </location>
</feature>
<feature type="helix" evidence="35">
    <location>
        <begin position="4788"/>
        <end position="4810"/>
    </location>
</feature>
<evidence type="ECO:0000250" key="1">
    <source>
        <dbReference type="UniProtKB" id="O88738"/>
    </source>
</evidence>
<evidence type="ECO:0000255" key="2">
    <source>
        <dbReference type="PROSITE-ProRule" id="PRU00388"/>
    </source>
</evidence>
<evidence type="ECO:0000256" key="3">
    <source>
        <dbReference type="SAM" id="MobiDB-lite"/>
    </source>
</evidence>
<evidence type="ECO:0000269" key="4">
    <source>
    </source>
</evidence>
<evidence type="ECO:0000269" key="5">
    <source>
    </source>
</evidence>
<evidence type="ECO:0000269" key="6">
    <source>
    </source>
</evidence>
<evidence type="ECO:0000269" key="7">
    <source>
    </source>
</evidence>
<evidence type="ECO:0000269" key="8">
    <source>
    </source>
</evidence>
<evidence type="ECO:0000269" key="9">
    <source>
    </source>
</evidence>
<evidence type="ECO:0000303" key="10">
    <source>
    </source>
</evidence>
<evidence type="ECO:0000303" key="11">
    <source>
    </source>
</evidence>
<evidence type="ECO:0000303" key="12">
    <source>
    </source>
</evidence>
<evidence type="ECO:0000303" key="13">
    <source>
    </source>
</evidence>
<evidence type="ECO:0000303" key="14">
    <source>
    </source>
</evidence>
<evidence type="ECO:0000305" key="15"/>
<evidence type="ECO:0007744" key="16">
    <source>
        <dbReference type="PDB" id="3CEG"/>
    </source>
</evidence>
<evidence type="ECO:0007744" key="17">
    <source>
        <dbReference type="PDB" id="8ATM"/>
    </source>
</evidence>
<evidence type="ECO:0007744" key="18">
    <source>
        <dbReference type="PDB" id="8ATO"/>
    </source>
</evidence>
<evidence type="ECO:0007744" key="19">
    <source>
        <dbReference type="PDB" id="8ATU"/>
    </source>
</evidence>
<evidence type="ECO:0007744" key="20">
    <source>
        <dbReference type="PDB" id="8ATX"/>
    </source>
</evidence>
<evidence type="ECO:0007744" key="21">
    <source>
        <dbReference type="PDB" id="8AUK"/>
    </source>
</evidence>
<evidence type="ECO:0007744" key="22">
    <source>
        <dbReference type="PDB" id="8AUW"/>
    </source>
</evidence>
<evidence type="ECO:0007744" key="23">
    <source>
        <dbReference type="PDB" id="8E2D"/>
    </source>
</evidence>
<evidence type="ECO:0007744" key="24">
    <source>
        <dbReference type="PDB" id="8E2E"/>
    </source>
</evidence>
<evidence type="ECO:0007744" key="25">
    <source>
        <dbReference type="PDB" id="8E2F"/>
    </source>
</evidence>
<evidence type="ECO:0007744" key="26">
    <source>
        <dbReference type="PDB" id="8E2G"/>
    </source>
</evidence>
<evidence type="ECO:0007744" key="27">
    <source>
        <dbReference type="PDB" id="8E2H"/>
    </source>
</evidence>
<evidence type="ECO:0007744" key="28">
    <source>
        <dbReference type="PDB" id="8E2I"/>
    </source>
</evidence>
<evidence type="ECO:0007744" key="29">
    <source>
        <dbReference type="PDB" id="8E2K"/>
    </source>
</evidence>
<evidence type="ECO:0007744" key="30">
    <source>
    </source>
</evidence>
<evidence type="ECO:0007744" key="31">
    <source>
    </source>
</evidence>
<evidence type="ECO:0007744" key="32">
    <source>
    </source>
</evidence>
<evidence type="ECO:0007744" key="33">
    <source>
    </source>
</evidence>
<evidence type="ECO:0007744" key="34">
    <source>
    </source>
</evidence>
<evidence type="ECO:0007829" key="35">
    <source>
        <dbReference type="PDB" id="3CEG"/>
    </source>
</evidence>
<evidence type="ECO:0007829" key="36">
    <source>
        <dbReference type="PDB" id="8E2F"/>
    </source>
</evidence>
<evidence type="ECO:0007829" key="37">
    <source>
        <dbReference type="PDB" id="8E2G"/>
    </source>
</evidence>
<evidence type="ECO:0007829" key="38">
    <source>
        <dbReference type="PDB" id="8E2H"/>
    </source>
</evidence>